<dbReference type="EMBL" id="AC008734">
    <property type="status" value="NOT_ANNOTATED_CDS"/>
    <property type="molecule type" value="Genomic_DNA"/>
</dbReference>
<dbReference type="EMBL" id="KF456494">
    <property type="status" value="NOT_ANNOTATED_CDS"/>
    <property type="molecule type" value="Genomic_DNA"/>
</dbReference>
<dbReference type="EMBL" id="AC016584">
    <property type="status" value="NOT_ANNOTATED_CDS"/>
    <property type="molecule type" value="Genomic_DNA"/>
</dbReference>
<dbReference type="EMBL" id="AF414442">
    <property type="protein sequence ID" value="AAL65133.2"/>
    <property type="status" value="ALT_FRAME"/>
    <property type="molecule type" value="mRNA"/>
</dbReference>
<dbReference type="EMBL" id="AF361486">
    <property type="protein sequence ID" value="AAK74120.3"/>
    <property type="molecule type" value="mRNA"/>
</dbReference>
<dbReference type="EMBL" id="AK128681">
    <property type="protein sequence ID" value="BAC87568.1"/>
    <property type="status" value="ALT_INIT"/>
    <property type="molecule type" value="mRNA"/>
</dbReference>
<dbReference type="CCDS" id="CCDS54212.1"/>
<dbReference type="RefSeq" id="NP_078966.2">
    <property type="nucleotide sequence ID" value="NM_024690.2"/>
</dbReference>
<dbReference type="PDB" id="7SA9">
    <property type="method" value="X-ray"/>
    <property type="resolution" value="1.69 A"/>
    <property type="chains" value="A/B=12665-12857"/>
</dbReference>
<dbReference type="PDB" id="8GKL">
    <property type="method" value="X-ray"/>
    <property type="resolution" value="2.60 A"/>
    <property type="chains" value="E=12695-12821"/>
</dbReference>
<dbReference type="PDB" id="8VM1">
    <property type="method" value="X-ray"/>
    <property type="resolution" value="2.65 A"/>
    <property type="chains" value="A=13475-13600"/>
</dbReference>
<dbReference type="PDB" id="8VRS">
    <property type="method" value="X-ray"/>
    <property type="resolution" value="2.47 A"/>
    <property type="chains" value="A/B=14421-14446"/>
</dbReference>
<dbReference type="PDBsum" id="7SA9"/>
<dbReference type="PDBsum" id="8GKL"/>
<dbReference type="PDBsum" id="8VM1"/>
<dbReference type="PDBsum" id="8VRS"/>
<dbReference type="SMR" id="Q8WXI7"/>
<dbReference type="BioGRID" id="125094">
    <property type="interactions" value="29"/>
</dbReference>
<dbReference type="FunCoup" id="Q8WXI7">
    <property type="interactions" value="66"/>
</dbReference>
<dbReference type="IntAct" id="Q8WXI7">
    <property type="interactions" value="2"/>
</dbReference>
<dbReference type="STRING" id="9606.ENSP00000381008"/>
<dbReference type="ChEMBL" id="CHEMBL3580482"/>
<dbReference type="DrugBank" id="DB01093">
    <property type="generic name" value="Dimethyl sulfoxide"/>
</dbReference>
<dbReference type="DrugBank" id="DB04964">
    <property type="generic name" value="Oregovomab"/>
</dbReference>
<dbReference type="GlyCosmos" id="Q8WXI7">
    <property type="glycosylation" value="103 sites, 1 glycan"/>
</dbReference>
<dbReference type="GlyGen" id="Q8WXI7">
    <property type="glycosylation" value="264 sites, 21 N-linked glycans (33 sites), 2 O-linked glycans (115 sites)"/>
</dbReference>
<dbReference type="iPTMnet" id="Q8WXI7"/>
<dbReference type="PhosphoSitePlus" id="Q8WXI7"/>
<dbReference type="SwissPalm" id="Q8WXI7"/>
<dbReference type="BioMuta" id="MUC16"/>
<dbReference type="CPTAC" id="CPTAC-2227"/>
<dbReference type="jPOST" id="Q8WXI7"/>
<dbReference type="MassIVE" id="Q8WXI7"/>
<dbReference type="PaxDb" id="9606-ENSP00000381008"/>
<dbReference type="PeptideAtlas" id="Q8WXI7"/>
<dbReference type="ProteomicsDB" id="6210"/>
<dbReference type="ProteomicsDB" id="75068"/>
<dbReference type="Pumba" id="Q8WXI7"/>
<dbReference type="ABCD" id="Q8WXI7">
    <property type="antibodies" value="12 sequenced antibodies"/>
</dbReference>
<dbReference type="Antibodypedia" id="3492">
    <property type="antibodies" value="1247 antibodies from 40 providers"/>
</dbReference>
<dbReference type="CPTC" id="Q8WXI7">
    <property type="antibodies" value="3 antibodies"/>
</dbReference>
<dbReference type="DNASU" id="94025"/>
<dbReference type="Ensembl" id="ENST00000397910.8">
    <property type="protein sequence ID" value="ENSP00000381008.2"/>
    <property type="gene ID" value="ENSG00000181143.17"/>
</dbReference>
<dbReference type="GeneID" id="94025"/>
<dbReference type="KEGG" id="hsa:94025"/>
<dbReference type="UCSC" id="uc002mkp.3">
    <property type="organism name" value="human"/>
</dbReference>
<dbReference type="AGR" id="HGNC:15582"/>
<dbReference type="CTD" id="94025"/>
<dbReference type="DisGeNET" id="94025"/>
<dbReference type="GeneCards" id="MUC16"/>
<dbReference type="HGNC" id="HGNC:15582">
    <property type="gene designation" value="MUC16"/>
</dbReference>
<dbReference type="HPA" id="ENSG00000181143">
    <property type="expression patterns" value="Group enriched (adipose tissue, cervix, fallopian tube, salivary gland)"/>
</dbReference>
<dbReference type="MalaCards" id="MUC16"/>
<dbReference type="MIM" id="606154">
    <property type="type" value="gene"/>
</dbReference>
<dbReference type="neXtProt" id="NX_Q8WXI7"/>
<dbReference type="OpenTargets" id="ENSG00000181143"/>
<dbReference type="PharmGKB" id="PA31314"/>
<dbReference type="VEuPathDB" id="HostDB:ENSG00000181143"/>
<dbReference type="eggNOG" id="ENOG502RD3J">
    <property type="taxonomic scope" value="Eukaryota"/>
</dbReference>
<dbReference type="GeneTree" id="ENSGT00440000039287"/>
<dbReference type="InParanoid" id="Q8WXI7"/>
<dbReference type="OMA" id="GTYRVCY"/>
<dbReference type="OrthoDB" id="9947814at2759"/>
<dbReference type="PAN-GO" id="Q8WXI7">
    <property type="GO annotations" value="0 GO annotations based on evolutionary models"/>
</dbReference>
<dbReference type="PhylomeDB" id="Q8WXI7"/>
<dbReference type="TreeFam" id="TF335600"/>
<dbReference type="PathwayCommons" id="Q8WXI7"/>
<dbReference type="Reactome" id="R-HSA-5083625">
    <property type="pathway name" value="Defective GALNT3 causes HFTC"/>
</dbReference>
<dbReference type="Reactome" id="R-HSA-5083632">
    <property type="pathway name" value="Defective C1GALT1C1 causes TNPS"/>
</dbReference>
<dbReference type="Reactome" id="R-HSA-5083636">
    <property type="pathway name" value="Defective GALNT12 causes CRCS1"/>
</dbReference>
<dbReference type="Reactome" id="R-HSA-5621480">
    <property type="pathway name" value="Dectin-2 family"/>
</dbReference>
<dbReference type="Reactome" id="R-HSA-913709">
    <property type="pathway name" value="O-linked glycosylation of mucins"/>
</dbReference>
<dbReference type="Reactome" id="R-HSA-977068">
    <property type="pathway name" value="Termination of O-glycan biosynthesis"/>
</dbReference>
<dbReference type="SignaLink" id="Q8WXI7"/>
<dbReference type="BioGRID-ORCS" id="94025">
    <property type="hits" value="10 hits in 1147 CRISPR screens"/>
</dbReference>
<dbReference type="ChiTaRS" id="MUC16">
    <property type="organism name" value="human"/>
</dbReference>
<dbReference type="GeneWiki" id="CA-125"/>
<dbReference type="GenomeRNAi" id="94025"/>
<dbReference type="Pharos" id="Q8WXI7">
    <property type="development level" value="Tbio"/>
</dbReference>
<dbReference type="PRO" id="PR:Q8WXI7"/>
<dbReference type="Proteomes" id="UP000005640">
    <property type="component" value="Chromosome 19"/>
</dbReference>
<dbReference type="RNAct" id="Q8WXI7">
    <property type="molecule type" value="protein"/>
</dbReference>
<dbReference type="Bgee" id="ENSG00000181143">
    <property type="expression patterns" value="Expressed in nasal cavity epithelium and 79 other cell types or tissues"/>
</dbReference>
<dbReference type="ExpressionAtlas" id="Q8WXI7">
    <property type="expression patterns" value="baseline and differential"/>
</dbReference>
<dbReference type="GO" id="GO:0009897">
    <property type="term" value="C:external side of plasma membrane"/>
    <property type="evidence" value="ECO:0000314"/>
    <property type="project" value="UniProtKB"/>
</dbReference>
<dbReference type="GO" id="GO:0070062">
    <property type="term" value="C:extracellular exosome"/>
    <property type="evidence" value="ECO:0007005"/>
    <property type="project" value="UniProtKB"/>
</dbReference>
<dbReference type="GO" id="GO:0005796">
    <property type="term" value="C:Golgi lumen"/>
    <property type="evidence" value="ECO:0000304"/>
    <property type="project" value="Reactome"/>
</dbReference>
<dbReference type="GO" id="GO:0005886">
    <property type="term" value="C:plasma membrane"/>
    <property type="evidence" value="ECO:0000304"/>
    <property type="project" value="Reactome"/>
</dbReference>
<dbReference type="GO" id="GO:0031982">
    <property type="term" value="C:vesicle"/>
    <property type="evidence" value="ECO:0007005"/>
    <property type="project" value="UniProtKB"/>
</dbReference>
<dbReference type="GO" id="GO:0007155">
    <property type="term" value="P:cell adhesion"/>
    <property type="evidence" value="ECO:0000303"/>
    <property type="project" value="UniProtKB"/>
</dbReference>
<dbReference type="FunFam" id="3.30.70.960:FF:000003">
    <property type="entry name" value="MUC16 isoform 1"/>
    <property type="match status" value="15"/>
</dbReference>
<dbReference type="FunFam" id="3.30.70.960:FF:000012">
    <property type="entry name" value="MUC16 isoform 1"/>
    <property type="match status" value="1"/>
</dbReference>
<dbReference type="Gene3D" id="3.30.70.960">
    <property type="entry name" value="SEA domain"/>
    <property type="match status" value="16"/>
</dbReference>
<dbReference type="InterPro" id="IPR028850">
    <property type="entry name" value="MUC16"/>
</dbReference>
<dbReference type="InterPro" id="IPR000082">
    <property type="entry name" value="SEA_dom"/>
</dbReference>
<dbReference type="InterPro" id="IPR036364">
    <property type="entry name" value="SEA_dom_sf"/>
</dbReference>
<dbReference type="PANTHER" id="PTHR14672">
    <property type="entry name" value="MUCIN-16"/>
    <property type="match status" value="1"/>
</dbReference>
<dbReference type="PANTHER" id="PTHR14672:SF1">
    <property type="entry name" value="MUCIN-16"/>
    <property type="match status" value="1"/>
</dbReference>
<dbReference type="Pfam" id="PF01390">
    <property type="entry name" value="SEA"/>
    <property type="match status" value="16"/>
</dbReference>
<dbReference type="SMART" id="SM00200">
    <property type="entry name" value="SEA"/>
    <property type="match status" value="7"/>
</dbReference>
<dbReference type="SUPFAM" id="SSF82671">
    <property type="entry name" value="SEA domain"/>
    <property type="match status" value="16"/>
</dbReference>
<dbReference type="PROSITE" id="PS50024">
    <property type="entry name" value="SEA"/>
    <property type="match status" value="16"/>
</dbReference>
<proteinExistence type="evidence at protein level"/>
<organism>
    <name type="scientific">Homo sapiens</name>
    <name type="common">Human</name>
    <dbReference type="NCBI Taxonomy" id="9606"/>
    <lineage>
        <taxon>Eukaryota</taxon>
        <taxon>Metazoa</taxon>
        <taxon>Chordata</taxon>
        <taxon>Craniata</taxon>
        <taxon>Vertebrata</taxon>
        <taxon>Euteleostomi</taxon>
        <taxon>Mammalia</taxon>
        <taxon>Eutheria</taxon>
        <taxon>Euarchontoglires</taxon>
        <taxon>Primates</taxon>
        <taxon>Haplorrhini</taxon>
        <taxon>Catarrhini</taxon>
        <taxon>Hominidae</taxon>
        <taxon>Homo</taxon>
    </lineage>
</organism>
<accession>Q8WXI7</accession>
<accession>B5ME49</accession>
<accession>Q6ZQW5</accession>
<accession>Q96RK2</accession>
<comment type="function">
    <text evidence="1">Thought to provide a protective, lubricating barrier against particles and infectious agents at mucosal surfaces.</text>
</comment>
<comment type="subunit">
    <text>Binds to MSLN. Binding to MSLN mediates heterotypic cell adhesion. This may contribute to the metastasis of ovarian cancer to the peritoneum by initiating cell attachment to the mesothelial epithelium via binding to MSLN.</text>
</comment>
<comment type="subcellular location">
    <subcellularLocation>
        <location>Cell membrane</location>
        <topology>Single-pass type I membrane protein</topology>
    </subcellularLocation>
    <subcellularLocation>
        <location>Secreted</location>
        <location>Extracellular space</location>
    </subcellularLocation>
    <text>May be liberated into the extracellular space following the phosphorylation of the intracellular C-terminus which induces the proteolytic cleavage and liberation of the extracellular domain.</text>
</comment>
<comment type="tissue specificity">
    <text evidence="5 7 9">Expressed in corneal and conjunctival epithelia (at protein level). Overexpressed in ovarian carcinomas and ovarian low malignant potential (LMP) tumors as compared to the expression in normal ovarian tissue and ovarian adenomas.</text>
</comment>
<comment type="induction">
    <text evidence="7">Up-regulated in ovarian cancer cells.</text>
</comment>
<comment type="domain">
    <text evidence="6">Composed of three domains, a Ser-, Thr-rich N-terminal domain, a repeated domain containing between 12 and 60 partially conserved tandem repeats of 156 amino acids and a C-terminal transmembrane contain domain with a short cytoplasmic tail.</text>
</comment>
<comment type="PTM">
    <text evidence="8">Heavily O-glycosylated; expresses both type 1 and type 2 core glycans.</text>
</comment>
<comment type="PTM">
    <text evidence="8">Heavily N-glycosylated; expresses primarily high mannose and complex bisecting type N-linked glycans.</text>
</comment>
<comment type="PTM">
    <text evidence="10">May be phosphorylated. Phosphorylation of the intracellular C-terminal domain may induce proteolytic cleavage and the liberation of the extracellular domain into the extracellular space.</text>
</comment>
<comment type="PTM">
    <text>May contain numerous disulfide bridges. Association of several molecules of the secreted form may occur through interchain disulfide bridges providing an extraordinarily large gel-like matrix in the extracellular space or in the lumen of secretory ducts.</text>
</comment>
<comment type="polymorphism">
    <text evidence="15">The number of repeats is highly polymorphic and can be composed between 12 and 60 extracellular mucin repeats.</text>
</comment>
<comment type="miscellaneous">
    <text>Antigen that is the basis for a widely used serum assay for the monitoring of patients with ovarian epithelial cancer. Due to lack of sensitivity for stage I disease and lack of specificity, it is of little value in the detection of early ovarian cancer. Due to its similarly elevated levels in some nonmalignant conditions, it is not specific enough to be used for population screening.</text>
</comment>
<comment type="sequence caution" evidence="14">
    <conflict type="frameshift">
        <sequence resource="EMBL-CDS" id="AAL65133"/>
    </conflict>
</comment>
<comment type="sequence caution" evidence="14">
    <conflict type="erroneous initiation">
        <sequence resource="EMBL-CDS" id="BAC87568"/>
    </conflict>
    <text>Truncated N-terminus.</text>
</comment>
<comment type="online information" name="Atlas of Genetics and Cytogenetics in Oncology and Haematology">
    <link uri="https://atlasgeneticsoncology.org/gene/41455/MUC16"/>
</comment>
<comment type="online information" name="Mucin database">
    <link uri="http://www.medkem.gu.se/mucinbiology/databases/"/>
</comment>
<feature type="chain" id="PRO_0000436078" description="Mucin-16">
    <location>
        <begin position="1"/>
        <end position="14507"/>
    </location>
</feature>
<feature type="topological domain" description="Extracellular" evidence="14">
    <location>
        <begin position="1"/>
        <end position="14451"/>
    </location>
</feature>
<feature type="transmembrane region" description="Helical" evidence="2">
    <location>
        <begin position="14452"/>
        <end position="14472"/>
    </location>
</feature>
<feature type="topological domain" description="Cytoplasmic" evidence="14">
    <location>
        <begin position="14473"/>
        <end position="14507"/>
    </location>
</feature>
<feature type="repeat" description="1" evidence="6">
    <location>
        <begin position="12067"/>
        <end position="12223"/>
    </location>
</feature>
<feature type="domain" description="SEA 1" evidence="3">
    <location>
        <begin position="12072"/>
        <end position="12193"/>
    </location>
</feature>
<feature type="repeat" description="2" evidence="6">
    <location>
        <begin position="12224"/>
        <end position="12381"/>
    </location>
</feature>
<feature type="domain" description="SEA 2" evidence="3">
    <location>
        <begin position="12228"/>
        <end position="12349"/>
    </location>
</feature>
<feature type="repeat" description="3" evidence="6">
    <location>
        <begin position="12382"/>
        <end position="12537"/>
    </location>
</feature>
<feature type="domain" description="SEA 3" evidence="3">
    <location>
        <begin position="12386"/>
        <end position="12507"/>
    </location>
</feature>
<feature type="repeat" description="4" evidence="6">
    <location>
        <begin position="12538"/>
        <end position="12692"/>
    </location>
</feature>
<feature type="domain" description="SEA 4" evidence="3">
    <location>
        <begin position="12542"/>
        <end position="12663"/>
    </location>
</feature>
<feature type="repeat" description="5" evidence="6">
    <location>
        <begin position="12693"/>
        <end position="12848"/>
    </location>
</feature>
<feature type="domain" description="SEA 5" evidence="3">
    <location>
        <begin position="12697"/>
        <end position="12818"/>
    </location>
</feature>
<feature type="repeat" description="6" evidence="6">
    <location>
        <begin position="12849"/>
        <end position="13004"/>
    </location>
</feature>
<feature type="domain" description="SEA 6" evidence="3">
    <location>
        <begin position="12853"/>
        <end position="12974"/>
    </location>
</feature>
<feature type="repeat" description="7" evidence="6">
    <location>
        <begin position="13005"/>
        <end position="13160"/>
    </location>
</feature>
<feature type="domain" description="SEA 7" evidence="3">
    <location>
        <begin position="13009"/>
        <end position="13130"/>
    </location>
</feature>
<feature type="repeat" description="8" evidence="6">
    <location>
        <begin position="13161"/>
        <end position="13316"/>
    </location>
</feature>
<feature type="domain" description="SEA 8" evidence="3">
    <location>
        <begin position="13165"/>
        <end position="13286"/>
    </location>
</feature>
<feature type="repeat" description="9" evidence="6">
    <location>
        <begin position="13317"/>
        <end position="13472"/>
    </location>
</feature>
<feature type="domain" description="SEA 9" evidence="3">
    <location>
        <begin position="13321"/>
        <end position="13442"/>
    </location>
</feature>
<feature type="repeat" description="10" evidence="6">
    <location>
        <begin position="13473"/>
        <end position="13628"/>
    </location>
</feature>
<feature type="domain" description="SEA 10" evidence="3">
    <location>
        <begin position="13477"/>
        <end position="13598"/>
    </location>
</feature>
<feature type="repeat" description="11" evidence="6">
    <location>
        <begin position="13629"/>
        <end position="13784"/>
    </location>
</feature>
<feature type="domain" description="SEA 11" evidence="3">
    <location>
        <begin position="13633"/>
        <end position="13754"/>
    </location>
</feature>
<feature type="repeat" description="12" evidence="6">
    <location>
        <begin position="13785"/>
        <end position="13939"/>
    </location>
</feature>
<feature type="domain" description="SEA 12" evidence="3">
    <location>
        <begin position="13789"/>
        <end position="13909"/>
    </location>
</feature>
<feature type="domain" description="SEA 13" evidence="3">
    <location>
        <begin position="13922"/>
        <end position="14043"/>
    </location>
</feature>
<feature type="domain" description="SEA 14" evidence="3">
    <location>
        <begin position="14073"/>
        <end position="14193"/>
    </location>
</feature>
<feature type="domain" description="SEA 15" evidence="3">
    <location>
        <begin position="14198"/>
        <end position="14309"/>
    </location>
</feature>
<feature type="domain" description="SEA 16" evidence="3">
    <location>
        <begin position="14319"/>
        <end position="14438"/>
    </location>
</feature>
<feature type="region of interest" description="Disordered" evidence="4">
    <location>
        <begin position="1"/>
        <end position="138"/>
    </location>
</feature>
<feature type="region of interest" description="Disordered" evidence="4">
    <location>
        <begin position="160"/>
        <end position="180"/>
    </location>
</feature>
<feature type="region of interest" description="Disordered" evidence="4">
    <location>
        <begin position="198"/>
        <end position="229"/>
    </location>
</feature>
<feature type="region of interest" description="Disordered" evidence="4">
    <location>
        <begin position="265"/>
        <end position="287"/>
    </location>
</feature>
<feature type="region of interest" description="Disordered" evidence="4">
    <location>
        <begin position="396"/>
        <end position="554"/>
    </location>
</feature>
<feature type="region of interest" description="Disordered" evidence="4">
    <location>
        <begin position="655"/>
        <end position="674"/>
    </location>
</feature>
<feature type="region of interest" description="Disordered" evidence="4">
    <location>
        <begin position="695"/>
        <end position="719"/>
    </location>
</feature>
<feature type="region of interest" description="Disordered" evidence="4">
    <location>
        <begin position="740"/>
        <end position="888"/>
    </location>
</feature>
<feature type="region of interest" description="Disordered" evidence="4">
    <location>
        <begin position="949"/>
        <end position="981"/>
    </location>
</feature>
<feature type="region of interest" description="Disordered" evidence="4">
    <location>
        <begin position="1082"/>
        <end position="1101"/>
    </location>
</feature>
<feature type="region of interest" description="Disordered" evidence="4">
    <location>
        <begin position="1121"/>
        <end position="1149"/>
    </location>
</feature>
<feature type="region of interest" description="Disordered" evidence="4">
    <location>
        <begin position="1301"/>
        <end position="1378"/>
    </location>
</feature>
<feature type="region of interest" description="Disordered" evidence="4">
    <location>
        <begin position="1593"/>
        <end position="1641"/>
    </location>
</feature>
<feature type="region of interest" description="Disordered" evidence="4">
    <location>
        <begin position="1704"/>
        <end position="1757"/>
    </location>
</feature>
<feature type="region of interest" description="Disordered" evidence="4">
    <location>
        <begin position="1846"/>
        <end position="1930"/>
    </location>
</feature>
<feature type="region of interest" description="Disordered" evidence="4">
    <location>
        <begin position="2010"/>
        <end position="2033"/>
    </location>
</feature>
<feature type="region of interest" description="Disordered" evidence="4">
    <location>
        <begin position="2064"/>
        <end position="2140"/>
    </location>
</feature>
<feature type="region of interest" description="Disordered" evidence="4">
    <location>
        <begin position="2153"/>
        <end position="2177"/>
    </location>
</feature>
<feature type="region of interest" description="Disordered" evidence="4">
    <location>
        <begin position="2393"/>
        <end position="2455"/>
    </location>
</feature>
<feature type="region of interest" description="Disordered" evidence="4">
    <location>
        <begin position="2566"/>
        <end position="2591"/>
    </location>
</feature>
<feature type="region of interest" description="Disordered" evidence="4">
    <location>
        <begin position="2789"/>
        <end position="2822"/>
    </location>
</feature>
<feature type="region of interest" description="Disordered" evidence="4">
    <location>
        <begin position="2838"/>
        <end position="2885"/>
    </location>
</feature>
<feature type="region of interest" description="Disordered" evidence="4">
    <location>
        <begin position="2901"/>
        <end position="3006"/>
    </location>
</feature>
<feature type="region of interest" description="Disordered" evidence="4">
    <location>
        <begin position="3019"/>
        <end position="3052"/>
    </location>
</feature>
<feature type="region of interest" description="Disordered" evidence="4">
    <location>
        <begin position="3083"/>
        <end position="3148"/>
    </location>
</feature>
<feature type="region of interest" description="Disordered" evidence="4">
    <location>
        <begin position="3172"/>
        <end position="3235"/>
    </location>
</feature>
<feature type="region of interest" description="Disordered" evidence="4">
    <location>
        <begin position="3251"/>
        <end position="3276"/>
    </location>
</feature>
<feature type="region of interest" description="Disordered" evidence="4">
    <location>
        <begin position="3299"/>
        <end position="3392"/>
    </location>
</feature>
<feature type="region of interest" description="Disordered" evidence="4">
    <location>
        <begin position="3415"/>
        <end position="3436"/>
    </location>
</feature>
<feature type="region of interest" description="Disordered" evidence="4">
    <location>
        <begin position="3462"/>
        <end position="3491"/>
    </location>
</feature>
<feature type="region of interest" description="Disordered" evidence="4">
    <location>
        <begin position="3538"/>
        <end position="3588"/>
    </location>
</feature>
<feature type="region of interest" description="Disordered" evidence="4">
    <location>
        <begin position="3644"/>
        <end position="3672"/>
    </location>
</feature>
<feature type="region of interest" description="Disordered" evidence="4">
    <location>
        <begin position="3794"/>
        <end position="3829"/>
    </location>
</feature>
<feature type="region of interest" description="Disordered" evidence="4">
    <location>
        <begin position="3843"/>
        <end position="3879"/>
    </location>
</feature>
<feature type="region of interest" description="Disordered" evidence="4">
    <location>
        <begin position="3914"/>
        <end position="3982"/>
    </location>
</feature>
<feature type="region of interest" description="Disordered" evidence="4">
    <location>
        <begin position="4024"/>
        <end position="4056"/>
    </location>
</feature>
<feature type="region of interest" description="Disordered" evidence="4">
    <location>
        <begin position="4094"/>
        <end position="4121"/>
    </location>
</feature>
<feature type="region of interest" description="Disordered" evidence="4">
    <location>
        <begin position="4138"/>
        <end position="4166"/>
    </location>
</feature>
<feature type="region of interest" description="Disordered" evidence="4">
    <location>
        <begin position="4728"/>
        <end position="4748"/>
    </location>
</feature>
<feature type="region of interest" description="Disordered" evidence="4">
    <location>
        <begin position="4845"/>
        <end position="4961"/>
    </location>
</feature>
<feature type="region of interest" description="Disordered" evidence="4">
    <location>
        <begin position="5026"/>
        <end position="5066"/>
    </location>
</feature>
<feature type="region of interest" description="Disordered" evidence="4">
    <location>
        <begin position="5128"/>
        <end position="5149"/>
    </location>
</feature>
<feature type="region of interest" description="Disordered" evidence="4">
    <location>
        <begin position="5221"/>
        <end position="5249"/>
    </location>
</feature>
<feature type="region of interest" description="Disordered" evidence="4">
    <location>
        <begin position="5271"/>
        <end position="5303"/>
    </location>
</feature>
<feature type="region of interest" description="Disordered" evidence="4">
    <location>
        <begin position="5328"/>
        <end position="5365"/>
    </location>
</feature>
<feature type="region of interest" description="Disordered" evidence="4">
    <location>
        <begin position="5381"/>
        <end position="5400"/>
    </location>
</feature>
<feature type="region of interest" description="Disordered" evidence="4">
    <location>
        <begin position="5426"/>
        <end position="5507"/>
    </location>
</feature>
<feature type="region of interest" description="Disordered" evidence="4">
    <location>
        <begin position="5519"/>
        <end position="5538"/>
    </location>
</feature>
<feature type="region of interest" description="Disordered" evidence="4">
    <location>
        <begin position="5624"/>
        <end position="5654"/>
    </location>
</feature>
<feature type="region of interest" description="Disordered" evidence="4">
    <location>
        <begin position="5675"/>
        <end position="5696"/>
    </location>
</feature>
<feature type="region of interest" description="Disordered" evidence="4">
    <location>
        <begin position="5727"/>
        <end position="5747"/>
    </location>
</feature>
<feature type="region of interest" description="Disordered" evidence="4">
    <location>
        <begin position="5882"/>
        <end position="5931"/>
    </location>
</feature>
<feature type="region of interest" description="Disordered" evidence="4">
    <location>
        <begin position="6054"/>
        <end position="6078"/>
    </location>
</feature>
<feature type="region of interest" description="Disordered" evidence="4">
    <location>
        <begin position="6122"/>
        <end position="6149"/>
    </location>
</feature>
<feature type="region of interest" description="Disordered" evidence="4">
    <location>
        <begin position="6219"/>
        <end position="6251"/>
    </location>
</feature>
<feature type="region of interest" description="Disordered" evidence="4">
    <location>
        <begin position="6399"/>
        <end position="6425"/>
    </location>
</feature>
<feature type="region of interest" description="Disordered" evidence="4">
    <location>
        <begin position="6438"/>
        <end position="6459"/>
    </location>
</feature>
<feature type="region of interest" description="Disordered" evidence="4">
    <location>
        <begin position="6497"/>
        <end position="6545"/>
    </location>
</feature>
<feature type="region of interest" description="Disordered" evidence="4">
    <location>
        <begin position="6682"/>
        <end position="6714"/>
    </location>
</feature>
<feature type="region of interest" description="Disordered" evidence="4">
    <location>
        <begin position="6800"/>
        <end position="6822"/>
    </location>
</feature>
<feature type="region of interest" description="Disordered" evidence="4">
    <location>
        <begin position="6845"/>
        <end position="6865"/>
    </location>
</feature>
<feature type="region of interest" description="Disordered" evidence="4">
    <location>
        <begin position="6886"/>
        <end position="6939"/>
    </location>
</feature>
<feature type="region of interest" description="Disordered" evidence="4">
    <location>
        <begin position="6981"/>
        <end position="7004"/>
    </location>
</feature>
<feature type="region of interest" description="Disordered" evidence="4">
    <location>
        <begin position="7028"/>
        <end position="7107"/>
    </location>
</feature>
<feature type="region of interest" description="Disordered" evidence="4">
    <location>
        <begin position="7143"/>
        <end position="7208"/>
    </location>
</feature>
<feature type="region of interest" description="Disordered" evidence="4">
    <location>
        <begin position="7279"/>
        <end position="7302"/>
    </location>
</feature>
<feature type="region of interest" description="Disordered" evidence="4">
    <location>
        <begin position="7320"/>
        <end position="7345"/>
    </location>
</feature>
<feature type="region of interest" description="Disordered" evidence="4">
    <location>
        <begin position="7360"/>
        <end position="7427"/>
    </location>
</feature>
<feature type="region of interest" description="Disordered" evidence="4">
    <location>
        <begin position="7437"/>
        <end position="7456"/>
    </location>
</feature>
<feature type="region of interest" description="Disordered" evidence="4">
    <location>
        <begin position="7463"/>
        <end position="7503"/>
    </location>
</feature>
<feature type="region of interest" description="Disordered" evidence="4">
    <location>
        <begin position="7527"/>
        <end position="7553"/>
    </location>
</feature>
<feature type="region of interest" description="Disordered" evidence="4">
    <location>
        <begin position="7577"/>
        <end position="7597"/>
    </location>
</feature>
<feature type="region of interest" description="Disordered" evidence="4">
    <location>
        <begin position="7726"/>
        <end position="7782"/>
    </location>
</feature>
<feature type="region of interest" description="Disordered" evidence="4">
    <location>
        <begin position="7825"/>
        <end position="7849"/>
    </location>
</feature>
<feature type="region of interest" description="Disordered" evidence="4">
    <location>
        <begin position="7908"/>
        <end position="7927"/>
    </location>
</feature>
<feature type="region of interest" description="Disordered" evidence="4">
    <location>
        <begin position="7970"/>
        <end position="8000"/>
    </location>
</feature>
<feature type="region of interest" description="Disordered" evidence="4">
    <location>
        <begin position="8042"/>
        <end position="8078"/>
    </location>
</feature>
<feature type="region of interest" description="Disordered" evidence="4">
    <location>
        <begin position="8111"/>
        <end position="8134"/>
    </location>
</feature>
<feature type="region of interest" description="Disordered" evidence="4">
    <location>
        <begin position="8312"/>
        <end position="8331"/>
    </location>
</feature>
<feature type="region of interest" description="Disordered" evidence="4">
    <location>
        <begin position="8342"/>
        <end position="8389"/>
    </location>
</feature>
<feature type="region of interest" description="Disordered" evidence="4">
    <location>
        <begin position="8411"/>
        <end position="8472"/>
    </location>
</feature>
<feature type="region of interest" description="Disordered" evidence="4">
    <location>
        <begin position="8604"/>
        <end position="8624"/>
    </location>
</feature>
<feature type="region of interest" description="Disordered" evidence="4">
    <location>
        <begin position="8674"/>
        <end position="8741"/>
    </location>
</feature>
<feature type="region of interest" description="Disordered" evidence="4">
    <location>
        <begin position="8775"/>
        <end position="8880"/>
    </location>
</feature>
<feature type="region of interest" description="Disordered" evidence="4">
    <location>
        <begin position="8995"/>
        <end position="9018"/>
    </location>
</feature>
<feature type="region of interest" description="Disordered" evidence="4">
    <location>
        <begin position="9147"/>
        <end position="9168"/>
    </location>
</feature>
<feature type="region of interest" description="Disordered" evidence="4">
    <location>
        <begin position="9294"/>
        <end position="9460"/>
    </location>
</feature>
<feature type="region of interest" description="Disordered" evidence="4">
    <location>
        <begin position="9611"/>
        <end position="9635"/>
    </location>
</feature>
<feature type="region of interest" description="Disordered" evidence="4">
    <location>
        <begin position="9726"/>
        <end position="9753"/>
    </location>
</feature>
<feature type="region of interest" description="Disordered" evidence="4">
    <location>
        <begin position="9771"/>
        <end position="9791"/>
    </location>
</feature>
<feature type="region of interest" description="Disordered" evidence="4">
    <location>
        <begin position="9869"/>
        <end position="9890"/>
    </location>
</feature>
<feature type="region of interest" description="Disordered" evidence="4">
    <location>
        <begin position="10175"/>
        <end position="10218"/>
    </location>
</feature>
<feature type="region of interest" description="Disordered" evidence="4">
    <location>
        <begin position="10445"/>
        <end position="10469"/>
    </location>
</feature>
<feature type="region of interest" description="Disordered" evidence="4">
    <location>
        <begin position="10544"/>
        <end position="10590"/>
    </location>
</feature>
<feature type="region of interest" description="Disordered" evidence="4">
    <location>
        <begin position="10689"/>
        <end position="10719"/>
    </location>
</feature>
<feature type="region of interest" description="Disordered" evidence="4">
    <location>
        <begin position="10849"/>
        <end position="10872"/>
    </location>
</feature>
<feature type="region of interest" description="Disordered" evidence="4">
    <location>
        <begin position="10898"/>
        <end position="10926"/>
    </location>
</feature>
<feature type="region of interest" description="Disordered" evidence="4">
    <location>
        <begin position="11003"/>
        <end position="11036"/>
    </location>
</feature>
<feature type="region of interest" description="Disordered" evidence="4">
    <location>
        <begin position="11072"/>
        <end position="11092"/>
    </location>
</feature>
<feature type="region of interest" description="Disordered" evidence="4">
    <location>
        <begin position="11269"/>
        <end position="11301"/>
    </location>
</feature>
<feature type="region of interest" description="Disordered" evidence="4">
    <location>
        <begin position="11358"/>
        <end position="11400"/>
    </location>
</feature>
<feature type="region of interest" description="Disordered" evidence="4">
    <location>
        <begin position="11508"/>
        <end position="11537"/>
    </location>
</feature>
<feature type="region of interest" description="Disordered" evidence="4">
    <location>
        <begin position="11583"/>
        <end position="11724"/>
    </location>
</feature>
<feature type="region of interest" description="Disordered" evidence="4">
    <location>
        <begin position="11836"/>
        <end position="11861"/>
    </location>
</feature>
<feature type="region of interest" description="Disordered" evidence="4">
    <location>
        <begin position="11913"/>
        <end position="11937"/>
    </location>
</feature>
<feature type="region of interest" description="12 X approximate tandem repeats" evidence="6">
    <location>
        <begin position="12067"/>
        <end position="13939"/>
    </location>
</feature>
<feature type="region of interest" description="Disordered" evidence="4">
    <location>
        <begin position="12196"/>
        <end position="12226"/>
    </location>
</feature>
<feature type="region of interest" description="Disordered" evidence="4">
    <location>
        <begin position="12353"/>
        <end position="12376"/>
    </location>
</feature>
<feature type="region of interest" description="Disordered" evidence="4">
    <location>
        <begin position="12819"/>
        <end position="12849"/>
    </location>
</feature>
<feature type="region of interest" description="Disordered" evidence="4">
    <location>
        <begin position="12978"/>
        <end position="13003"/>
    </location>
</feature>
<feature type="region of interest" description="Disordered" evidence="4">
    <location>
        <begin position="13291"/>
        <end position="13317"/>
    </location>
</feature>
<feature type="region of interest" description="Disordered" evidence="4">
    <location>
        <begin position="13603"/>
        <end position="13625"/>
    </location>
</feature>
<feature type="compositionally biased region" description="Low complexity" evidence="4">
    <location>
        <begin position="1"/>
        <end position="17"/>
    </location>
</feature>
<feature type="compositionally biased region" description="Polar residues" evidence="4">
    <location>
        <begin position="35"/>
        <end position="46"/>
    </location>
</feature>
<feature type="compositionally biased region" description="Polar residues" evidence="4">
    <location>
        <begin position="56"/>
        <end position="138"/>
    </location>
</feature>
<feature type="compositionally biased region" description="Low complexity" evidence="4">
    <location>
        <begin position="166"/>
        <end position="178"/>
    </location>
</feature>
<feature type="compositionally biased region" description="Polar residues" evidence="4">
    <location>
        <begin position="212"/>
        <end position="229"/>
    </location>
</feature>
<feature type="compositionally biased region" description="Low complexity" evidence="4">
    <location>
        <begin position="276"/>
        <end position="287"/>
    </location>
</feature>
<feature type="compositionally biased region" description="Low complexity" evidence="4">
    <location>
        <begin position="396"/>
        <end position="413"/>
    </location>
</feature>
<feature type="compositionally biased region" description="Polar residues" evidence="4">
    <location>
        <begin position="414"/>
        <end position="423"/>
    </location>
</feature>
<feature type="compositionally biased region" description="Polar residues" evidence="4">
    <location>
        <begin position="431"/>
        <end position="441"/>
    </location>
</feature>
<feature type="compositionally biased region" description="Polar residues" evidence="4">
    <location>
        <begin position="460"/>
        <end position="478"/>
    </location>
</feature>
<feature type="compositionally biased region" description="Low complexity" evidence="4">
    <location>
        <begin position="485"/>
        <end position="497"/>
    </location>
</feature>
<feature type="compositionally biased region" description="Low complexity" evidence="4">
    <location>
        <begin position="508"/>
        <end position="525"/>
    </location>
</feature>
<feature type="compositionally biased region" description="Polar residues" evidence="4">
    <location>
        <begin position="526"/>
        <end position="543"/>
    </location>
</feature>
<feature type="compositionally biased region" description="Polar residues" evidence="4">
    <location>
        <begin position="696"/>
        <end position="706"/>
    </location>
</feature>
<feature type="compositionally biased region" description="Polar residues" evidence="4">
    <location>
        <begin position="740"/>
        <end position="780"/>
    </location>
</feature>
<feature type="compositionally biased region" description="Polar residues" evidence="4">
    <location>
        <begin position="787"/>
        <end position="796"/>
    </location>
</feature>
<feature type="compositionally biased region" description="Polar residues" evidence="4">
    <location>
        <begin position="805"/>
        <end position="821"/>
    </location>
</feature>
<feature type="compositionally biased region" description="Low complexity" evidence="4">
    <location>
        <begin position="823"/>
        <end position="846"/>
    </location>
</feature>
<feature type="compositionally biased region" description="Polar residues" evidence="4">
    <location>
        <begin position="847"/>
        <end position="860"/>
    </location>
</feature>
<feature type="compositionally biased region" description="Polar residues" evidence="4">
    <location>
        <begin position="869"/>
        <end position="888"/>
    </location>
</feature>
<feature type="compositionally biased region" description="Polar residues" evidence="4">
    <location>
        <begin position="949"/>
        <end position="969"/>
    </location>
</feature>
<feature type="compositionally biased region" description="Polar residues" evidence="4">
    <location>
        <begin position="1092"/>
        <end position="1101"/>
    </location>
</feature>
<feature type="compositionally biased region" description="Polar residues" evidence="4">
    <location>
        <begin position="1124"/>
        <end position="1137"/>
    </location>
</feature>
<feature type="compositionally biased region" description="Polar residues" evidence="4">
    <location>
        <begin position="1301"/>
        <end position="1317"/>
    </location>
</feature>
<feature type="compositionally biased region" description="Low complexity" evidence="4">
    <location>
        <begin position="1318"/>
        <end position="1328"/>
    </location>
</feature>
<feature type="compositionally biased region" description="Polar residues" evidence="4">
    <location>
        <begin position="1334"/>
        <end position="1347"/>
    </location>
</feature>
<feature type="compositionally biased region" description="Polar residues" evidence="4">
    <location>
        <begin position="1368"/>
        <end position="1378"/>
    </location>
</feature>
<feature type="compositionally biased region" description="Polar residues" evidence="4">
    <location>
        <begin position="1596"/>
        <end position="1613"/>
    </location>
</feature>
<feature type="compositionally biased region" description="Polar residues" evidence="4">
    <location>
        <begin position="1621"/>
        <end position="1633"/>
    </location>
</feature>
<feature type="compositionally biased region" description="Polar residues" evidence="4">
    <location>
        <begin position="1704"/>
        <end position="1745"/>
    </location>
</feature>
<feature type="compositionally biased region" description="Low complexity" evidence="4">
    <location>
        <begin position="1746"/>
        <end position="1757"/>
    </location>
</feature>
<feature type="compositionally biased region" description="Polar residues" evidence="4">
    <location>
        <begin position="1846"/>
        <end position="1908"/>
    </location>
</feature>
<feature type="compositionally biased region" description="Low complexity" evidence="4">
    <location>
        <begin position="2019"/>
        <end position="2033"/>
    </location>
</feature>
<feature type="compositionally biased region" description="Low complexity" evidence="4">
    <location>
        <begin position="2064"/>
        <end position="2085"/>
    </location>
</feature>
<feature type="compositionally biased region" description="Polar residues" evidence="4">
    <location>
        <begin position="2111"/>
        <end position="2132"/>
    </location>
</feature>
<feature type="compositionally biased region" description="Low complexity" evidence="4">
    <location>
        <begin position="2417"/>
        <end position="2429"/>
    </location>
</feature>
<feature type="compositionally biased region" description="Low complexity" evidence="4">
    <location>
        <begin position="2566"/>
        <end position="2583"/>
    </location>
</feature>
<feature type="compositionally biased region" description="Polar residues" evidence="4">
    <location>
        <begin position="2803"/>
        <end position="2819"/>
    </location>
</feature>
<feature type="compositionally biased region" description="Low complexity" evidence="4">
    <location>
        <begin position="2864"/>
        <end position="2875"/>
    </location>
</feature>
<feature type="compositionally biased region" description="Polar residues" evidence="4">
    <location>
        <begin position="2876"/>
        <end position="2885"/>
    </location>
</feature>
<feature type="compositionally biased region" description="Polar residues" evidence="4">
    <location>
        <begin position="2901"/>
        <end position="2918"/>
    </location>
</feature>
<feature type="compositionally biased region" description="Low complexity" evidence="4">
    <location>
        <begin position="2919"/>
        <end position="2931"/>
    </location>
</feature>
<feature type="compositionally biased region" description="Polar residues" evidence="4">
    <location>
        <begin position="2942"/>
        <end position="2968"/>
    </location>
</feature>
<feature type="compositionally biased region" description="Low complexity" evidence="4">
    <location>
        <begin position="3019"/>
        <end position="3035"/>
    </location>
</feature>
<feature type="compositionally biased region" description="Polar residues" evidence="4">
    <location>
        <begin position="3041"/>
        <end position="3052"/>
    </location>
</feature>
<feature type="compositionally biased region" description="Low complexity" evidence="4">
    <location>
        <begin position="3107"/>
        <end position="3116"/>
    </location>
</feature>
<feature type="compositionally biased region" description="Polar residues" evidence="4">
    <location>
        <begin position="3117"/>
        <end position="3132"/>
    </location>
</feature>
<feature type="compositionally biased region" description="Polar residues" evidence="4">
    <location>
        <begin position="3172"/>
        <end position="3181"/>
    </location>
</feature>
<feature type="compositionally biased region" description="Low complexity" evidence="4">
    <location>
        <begin position="3188"/>
        <end position="3200"/>
    </location>
</feature>
<feature type="compositionally biased region" description="Polar residues" evidence="4">
    <location>
        <begin position="3201"/>
        <end position="3214"/>
    </location>
</feature>
<feature type="compositionally biased region" description="Polar residues" evidence="4">
    <location>
        <begin position="3251"/>
        <end position="3261"/>
    </location>
</feature>
<feature type="compositionally biased region" description="Low complexity" evidence="4">
    <location>
        <begin position="3263"/>
        <end position="3274"/>
    </location>
</feature>
<feature type="compositionally biased region" description="Polar residues" evidence="4">
    <location>
        <begin position="3299"/>
        <end position="3342"/>
    </location>
</feature>
<feature type="compositionally biased region" description="Polar residues" evidence="4">
    <location>
        <begin position="3360"/>
        <end position="3383"/>
    </location>
</feature>
<feature type="compositionally biased region" description="Low complexity" evidence="4">
    <location>
        <begin position="3424"/>
        <end position="3436"/>
    </location>
</feature>
<feature type="compositionally biased region" description="Low complexity" evidence="4">
    <location>
        <begin position="3477"/>
        <end position="3491"/>
    </location>
</feature>
<feature type="compositionally biased region" description="Low complexity" evidence="4">
    <location>
        <begin position="3538"/>
        <end position="3555"/>
    </location>
</feature>
<feature type="compositionally biased region" description="Polar residues" evidence="4">
    <location>
        <begin position="3812"/>
        <end position="3824"/>
    </location>
</feature>
<feature type="compositionally biased region" description="Polar residues" evidence="4">
    <location>
        <begin position="3848"/>
        <end position="3868"/>
    </location>
</feature>
<feature type="compositionally biased region" description="Low complexity" evidence="4">
    <location>
        <begin position="3916"/>
        <end position="3927"/>
    </location>
</feature>
<feature type="compositionally biased region" description="Polar residues" evidence="4">
    <location>
        <begin position="3946"/>
        <end position="3982"/>
    </location>
</feature>
<feature type="compositionally biased region" description="Low complexity" evidence="4">
    <location>
        <begin position="4026"/>
        <end position="4041"/>
    </location>
</feature>
<feature type="compositionally biased region" description="Polar residues" evidence="4">
    <location>
        <begin position="4095"/>
        <end position="4121"/>
    </location>
</feature>
<feature type="compositionally biased region" description="Low complexity" evidence="4">
    <location>
        <begin position="4152"/>
        <end position="4164"/>
    </location>
</feature>
<feature type="compositionally biased region" description="Polar residues" evidence="4">
    <location>
        <begin position="4856"/>
        <end position="4876"/>
    </location>
</feature>
<feature type="compositionally biased region" description="Low complexity" evidence="4">
    <location>
        <begin position="4877"/>
        <end position="4914"/>
    </location>
</feature>
<feature type="compositionally biased region" description="Low complexity" evidence="4">
    <location>
        <begin position="4924"/>
        <end position="4939"/>
    </location>
</feature>
<feature type="compositionally biased region" description="Polar residues" evidence="4">
    <location>
        <begin position="4944"/>
        <end position="4961"/>
    </location>
</feature>
<feature type="compositionally biased region" description="Polar residues" evidence="4">
    <location>
        <begin position="5026"/>
        <end position="5037"/>
    </location>
</feature>
<feature type="compositionally biased region" description="Low complexity" evidence="4">
    <location>
        <begin position="5038"/>
        <end position="5047"/>
    </location>
</feature>
<feature type="compositionally biased region" description="Polar residues" evidence="4">
    <location>
        <begin position="5048"/>
        <end position="5059"/>
    </location>
</feature>
<feature type="compositionally biased region" description="Polar residues" evidence="4">
    <location>
        <begin position="5221"/>
        <end position="5234"/>
    </location>
</feature>
<feature type="compositionally biased region" description="Low complexity" evidence="4">
    <location>
        <begin position="5280"/>
        <end position="5293"/>
    </location>
</feature>
<feature type="compositionally biased region" description="Polar residues" evidence="4">
    <location>
        <begin position="5294"/>
        <end position="5303"/>
    </location>
</feature>
<feature type="compositionally biased region" description="Low complexity" evidence="4">
    <location>
        <begin position="5333"/>
        <end position="5365"/>
    </location>
</feature>
<feature type="compositionally biased region" description="Low complexity" evidence="4">
    <location>
        <begin position="5381"/>
        <end position="5393"/>
    </location>
</feature>
<feature type="compositionally biased region" description="Polar residues" evidence="4">
    <location>
        <begin position="5426"/>
        <end position="5441"/>
    </location>
</feature>
<feature type="compositionally biased region" description="Polar residues" evidence="4">
    <location>
        <begin position="5447"/>
        <end position="5485"/>
    </location>
</feature>
<feature type="compositionally biased region" description="Low complexity" evidence="4">
    <location>
        <begin position="5495"/>
        <end position="5504"/>
    </location>
</feature>
<feature type="compositionally biased region" description="Low complexity" evidence="4">
    <location>
        <begin position="5520"/>
        <end position="5532"/>
    </location>
</feature>
<feature type="compositionally biased region" description="Low complexity" evidence="4">
    <location>
        <begin position="5633"/>
        <end position="5654"/>
    </location>
</feature>
<feature type="compositionally biased region" description="Low complexity" evidence="4">
    <location>
        <begin position="5675"/>
        <end position="5688"/>
    </location>
</feature>
<feature type="compositionally biased region" description="Polar residues" evidence="4">
    <location>
        <begin position="5727"/>
        <end position="5737"/>
    </location>
</feature>
<feature type="compositionally biased region" description="Polar residues" evidence="4">
    <location>
        <begin position="5903"/>
        <end position="5916"/>
    </location>
</feature>
<feature type="compositionally biased region" description="Low complexity" evidence="4">
    <location>
        <begin position="5917"/>
        <end position="5928"/>
    </location>
</feature>
<feature type="compositionally biased region" description="Polar residues" evidence="4">
    <location>
        <begin position="6054"/>
        <end position="6063"/>
    </location>
</feature>
<feature type="compositionally biased region" description="Low complexity" evidence="4">
    <location>
        <begin position="6134"/>
        <end position="6149"/>
    </location>
</feature>
<feature type="compositionally biased region" description="Low complexity" evidence="4">
    <location>
        <begin position="6226"/>
        <end position="6251"/>
    </location>
</feature>
<feature type="compositionally biased region" description="Low complexity" evidence="4">
    <location>
        <begin position="6399"/>
        <end position="6410"/>
    </location>
</feature>
<feature type="compositionally biased region" description="Polar residues" evidence="4">
    <location>
        <begin position="6411"/>
        <end position="6425"/>
    </location>
</feature>
<feature type="compositionally biased region" description="Polar residues" evidence="4">
    <location>
        <begin position="6445"/>
        <end position="6459"/>
    </location>
</feature>
<feature type="compositionally biased region" description="Low complexity" evidence="4">
    <location>
        <begin position="6500"/>
        <end position="6523"/>
    </location>
</feature>
<feature type="compositionally biased region" description="Polar residues" evidence="4">
    <location>
        <begin position="6530"/>
        <end position="6545"/>
    </location>
</feature>
<feature type="compositionally biased region" description="Polar residues" evidence="4">
    <location>
        <begin position="6683"/>
        <end position="6699"/>
    </location>
</feature>
<feature type="compositionally biased region" description="Low complexity" evidence="4">
    <location>
        <begin position="6848"/>
        <end position="6864"/>
    </location>
</feature>
<feature type="compositionally biased region" description="Polar residues" evidence="4">
    <location>
        <begin position="6886"/>
        <end position="6905"/>
    </location>
</feature>
<feature type="compositionally biased region" description="Low complexity" evidence="4">
    <location>
        <begin position="6919"/>
        <end position="6938"/>
    </location>
</feature>
<feature type="compositionally biased region" description="Polar residues" evidence="4">
    <location>
        <begin position="7028"/>
        <end position="7038"/>
    </location>
</feature>
<feature type="compositionally biased region" description="Low complexity" evidence="4">
    <location>
        <begin position="7039"/>
        <end position="7055"/>
    </location>
</feature>
<feature type="compositionally biased region" description="Polar residues" evidence="4">
    <location>
        <begin position="7057"/>
        <end position="7075"/>
    </location>
</feature>
<feature type="compositionally biased region" description="Low complexity" evidence="4">
    <location>
        <begin position="7086"/>
        <end position="7105"/>
    </location>
</feature>
<feature type="compositionally biased region" description="Polar residues" evidence="4">
    <location>
        <begin position="7166"/>
        <end position="7200"/>
    </location>
</feature>
<feature type="compositionally biased region" description="Low complexity" evidence="4">
    <location>
        <begin position="7279"/>
        <end position="7298"/>
    </location>
</feature>
<feature type="compositionally biased region" description="Polar residues" evidence="4">
    <location>
        <begin position="7322"/>
        <end position="7345"/>
    </location>
</feature>
<feature type="compositionally biased region" description="Polar residues" evidence="4">
    <location>
        <begin position="7360"/>
        <end position="7371"/>
    </location>
</feature>
<feature type="compositionally biased region" description="Polar residues" evidence="4">
    <location>
        <begin position="7390"/>
        <end position="7402"/>
    </location>
</feature>
<feature type="compositionally biased region" description="Low complexity" evidence="4">
    <location>
        <begin position="7403"/>
        <end position="7427"/>
    </location>
</feature>
<feature type="compositionally biased region" description="Low complexity" evidence="4">
    <location>
        <begin position="7439"/>
        <end position="7455"/>
    </location>
</feature>
<feature type="compositionally biased region" description="Polar residues" evidence="4">
    <location>
        <begin position="7474"/>
        <end position="7484"/>
    </location>
</feature>
<feature type="compositionally biased region" description="Low complexity" evidence="4">
    <location>
        <begin position="7485"/>
        <end position="7494"/>
    </location>
</feature>
<feature type="compositionally biased region" description="Low complexity" evidence="4">
    <location>
        <begin position="7733"/>
        <end position="7749"/>
    </location>
</feature>
<feature type="compositionally biased region" description="Basic and acidic residues" evidence="4">
    <location>
        <begin position="7750"/>
        <end position="7765"/>
    </location>
</feature>
<feature type="compositionally biased region" description="Polar residues" evidence="4">
    <location>
        <begin position="7768"/>
        <end position="7782"/>
    </location>
</feature>
<feature type="compositionally biased region" description="Low complexity" evidence="4">
    <location>
        <begin position="7835"/>
        <end position="7846"/>
    </location>
</feature>
<feature type="compositionally biased region" description="Low complexity" evidence="4">
    <location>
        <begin position="7915"/>
        <end position="7927"/>
    </location>
</feature>
<feature type="compositionally biased region" description="Low complexity" evidence="4">
    <location>
        <begin position="7973"/>
        <end position="8000"/>
    </location>
</feature>
<feature type="compositionally biased region" description="Polar residues" evidence="4">
    <location>
        <begin position="8052"/>
        <end position="8078"/>
    </location>
</feature>
<feature type="compositionally biased region" description="Low complexity" evidence="4">
    <location>
        <begin position="8319"/>
        <end position="8328"/>
    </location>
</feature>
<feature type="compositionally biased region" description="Polar residues" evidence="4">
    <location>
        <begin position="8345"/>
        <end position="8389"/>
    </location>
</feature>
<feature type="compositionally biased region" description="Low complexity" evidence="4">
    <location>
        <begin position="8607"/>
        <end position="8624"/>
    </location>
</feature>
<feature type="compositionally biased region" description="Polar residues" evidence="4">
    <location>
        <begin position="8674"/>
        <end position="8740"/>
    </location>
</feature>
<feature type="compositionally biased region" description="Polar residues" evidence="4">
    <location>
        <begin position="8781"/>
        <end position="8810"/>
    </location>
</feature>
<feature type="compositionally biased region" description="Low complexity" evidence="4">
    <location>
        <begin position="8850"/>
        <end position="8880"/>
    </location>
</feature>
<feature type="compositionally biased region" description="Low complexity" evidence="4">
    <location>
        <begin position="9294"/>
        <end position="9307"/>
    </location>
</feature>
<feature type="compositionally biased region" description="Polar residues" evidence="4">
    <location>
        <begin position="9308"/>
        <end position="9357"/>
    </location>
</feature>
<feature type="compositionally biased region" description="Polar residues" evidence="4">
    <location>
        <begin position="9374"/>
        <end position="9412"/>
    </location>
</feature>
<feature type="compositionally biased region" description="Low complexity" evidence="4">
    <location>
        <begin position="9431"/>
        <end position="9460"/>
    </location>
</feature>
<feature type="compositionally biased region" description="Polar residues" evidence="4">
    <location>
        <begin position="9621"/>
        <end position="9635"/>
    </location>
</feature>
<feature type="compositionally biased region" description="Low complexity" evidence="4">
    <location>
        <begin position="9774"/>
        <end position="9790"/>
    </location>
</feature>
<feature type="compositionally biased region" description="Low complexity" evidence="4">
    <location>
        <begin position="9881"/>
        <end position="9890"/>
    </location>
</feature>
<feature type="compositionally biased region" description="Low complexity" evidence="4">
    <location>
        <begin position="10178"/>
        <end position="10193"/>
    </location>
</feature>
<feature type="compositionally biased region" description="Polar residues" evidence="4">
    <location>
        <begin position="10194"/>
        <end position="10212"/>
    </location>
</feature>
<feature type="compositionally biased region" description="Polar residues" evidence="4">
    <location>
        <begin position="10544"/>
        <end position="10573"/>
    </location>
</feature>
<feature type="compositionally biased region" description="Polar residues" evidence="4">
    <location>
        <begin position="10708"/>
        <end position="10719"/>
    </location>
</feature>
<feature type="compositionally biased region" description="Polar residues" evidence="4">
    <location>
        <begin position="10849"/>
        <end position="10860"/>
    </location>
</feature>
<feature type="compositionally biased region" description="Low complexity" evidence="4">
    <location>
        <begin position="10861"/>
        <end position="10872"/>
    </location>
</feature>
<feature type="compositionally biased region" description="Low complexity" evidence="4">
    <location>
        <begin position="11003"/>
        <end position="11018"/>
    </location>
</feature>
<feature type="compositionally biased region" description="Polar residues" evidence="4">
    <location>
        <begin position="11269"/>
        <end position="11284"/>
    </location>
</feature>
<feature type="compositionally biased region" description="Polar residues" evidence="4">
    <location>
        <begin position="11358"/>
        <end position="11381"/>
    </location>
</feature>
<feature type="compositionally biased region" description="Polar residues" evidence="4">
    <location>
        <begin position="11583"/>
        <end position="11594"/>
    </location>
</feature>
<feature type="compositionally biased region" description="Polar residues" evidence="4">
    <location>
        <begin position="11631"/>
        <end position="11651"/>
    </location>
</feature>
<feature type="compositionally biased region" description="Polar residues" evidence="4">
    <location>
        <begin position="11658"/>
        <end position="11672"/>
    </location>
</feature>
<feature type="compositionally biased region" description="Low complexity" evidence="4">
    <location>
        <begin position="11700"/>
        <end position="11717"/>
    </location>
</feature>
<feature type="compositionally biased region" description="Polar residues" evidence="4">
    <location>
        <begin position="11849"/>
        <end position="11861"/>
    </location>
</feature>
<feature type="compositionally biased region" description="Polar residues" evidence="4">
    <location>
        <begin position="11913"/>
        <end position="11928"/>
    </location>
</feature>
<feature type="compositionally biased region" description="Polar residues" evidence="4">
    <location>
        <begin position="12819"/>
        <end position="12834"/>
    </location>
</feature>
<feature type="compositionally biased region" description="Low complexity" evidence="4">
    <location>
        <begin position="12835"/>
        <end position="12849"/>
    </location>
</feature>
<feature type="compositionally biased region" description="Polar residues" evidence="4">
    <location>
        <begin position="12978"/>
        <end position="12990"/>
    </location>
</feature>
<feature type="compositionally biased region" description="Low complexity" evidence="4">
    <location>
        <begin position="12991"/>
        <end position="13003"/>
    </location>
</feature>
<feature type="compositionally biased region" description="Polar residues" evidence="4">
    <location>
        <begin position="13291"/>
        <end position="13313"/>
    </location>
</feature>
<feature type="compositionally biased region" description="Polar residues" evidence="4">
    <location>
        <begin position="13603"/>
        <end position="13621"/>
    </location>
</feature>
<feature type="glycosylation site" description="N-linked (GlcNAc...) asparagine" evidence="2">
    <location>
        <position position="139"/>
    </location>
</feature>
<feature type="glycosylation site" description="N-linked (GlcNAc...) asparagine" evidence="2">
    <location>
        <position position="434"/>
    </location>
</feature>
<feature type="glycosylation site" description="N-linked (GlcNAc...) asparagine" evidence="2">
    <location>
        <position position="787"/>
    </location>
</feature>
<feature type="glycosylation site" description="N-linked (GlcNAc...) asparagine" evidence="2">
    <location>
        <position position="930"/>
    </location>
</feature>
<feature type="glycosylation site" description="N-linked (GlcNAc...) asparagine" evidence="2">
    <location>
        <position position="957"/>
    </location>
</feature>
<feature type="glycosylation site" description="N-linked (GlcNAc...) asparagine" evidence="2">
    <location>
        <position position="1375"/>
    </location>
</feature>
<feature type="glycosylation site" description="N-linked (GlcNAc...) asparagine" evidence="2">
    <location>
        <position position="1633"/>
    </location>
</feature>
<feature type="glycosylation site" description="N-linked (GlcNAc...) asparagine" evidence="2">
    <location>
        <position position="1840"/>
    </location>
</feature>
<feature type="glycosylation site" description="N-linked (GlcNAc...) asparagine" evidence="2">
    <location>
        <position position="1877"/>
    </location>
</feature>
<feature type="glycosylation site" description="N-linked (GlcNAc...) asparagine" evidence="2">
    <location>
        <position position="1890"/>
    </location>
</feature>
<feature type="glycosylation site" description="N-linked (GlcNAc...) asparagine" evidence="2">
    <location>
        <position position="2345"/>
    </location>
</feature>
<feature type="glycosylation site" description="N-linked (GlcNAc...) asparagine" evidence="2">
    <location>
        <position position="2375"/>
    </location>
</feature>
<feature type="glycosylation site" description="N-linked (GlcNAc...) asparagine" evidence="2">
    <location>
        <position position="2737"/>
    </location>
</feature>
<feature type="glycosylation site" description="N-linked (GlcNAc...) asparagine" evidence="2">
    <location>
        <position position="3085"/>
    </location>
</feature>
<feature type="glycosylation site" description="N-linked (GlcNAc...) asparagine" evidence="2">
    <location>
        <position position="3178"/>
    </location>
</feature>
<feature type="glycosylation site" description="N-linked (GlcNAc...) asparagine" evidence="2">
    <location>
        <position position="3501"/>
    </location>
</feature>
<feature type="glycosylation site" description="N-linked (GlcNAc...) asparagine" evidence="2">
    <location>
        <position position="4220"/>
    </location>
</feature>
<feature type="glycosylation site" description="N-linked (GlcNAc...) asparagine" evidence="2">
    <location>
        <position position="4498"/>
    </location>
</feature>
<feature type="glycosylation site" description="N-linked (GlcNAc...) asparagine" evidence="2">
    <location>
        <position position="4606"/>
    </location>
</feature>
<feature type="glycosylation site" description="N-linked (GlcNAc...) asparagine" evidence="2">
    <location>
        <position position="4613"/>
    </location>
</feature>
<feature type="glycosylation site" description="N-linked (GlcNAc...) asparagine" evidence="2">
    <location>
        <position position="4624"/>
    </location>
</feature>
<feature type="glycosylation site" description="N-linked (GlcNAc...) asparagine" evidence="2">
    <location>
        <position position="4861"/>
    </location>
</feature>
<feature type="glycosylation site" description="N-linked (GlcNAc...) asparagine" evidence="2">
    <location>
        <position position="5096"/>
    </location>
</feature>
<feature type="glycosylation site" description="N-linked (GlcNAc...) asparagine" evidence="2">
    <location>
        <position position="5131"/>
    </location>
</feature>
<feature type="glycosylation site" description="N-linked (GlcNAc...) asparagine" evidence="2">
    <location>
        <position position="5228"/>
    </location>
</feature>
<feature type="glycosylation site" description="N-linked (GlcNAc...) asparagine" evidence="2">
    <location>
        <position position="5320"/>
    </location>
</feature>
<feature type="glycosylation site" description="N-linked (GlcNAc...) asparagine" evidence="2">
    <location>
        <position position="5394"/>
    </location>
</feature>
<feature type="glycosylation site" description="N-linked (GlcNAc...) asparagine" evidence="2">
    <location>
        <position position="5470"/>
    </location>
</feature>
<feature type="glycosylation site" description="N-linked (GlcNAc...) asparagine" evidence="2">
    <location>
        <position position="5689"/>
    </location>
</feature>
<feature type="glycosylation site" description="N-linked (GlcNAc...) asparagine" evidence="2">
    <location>
        <position position="5863"/>
    </location>
</feature>
<feature type="glycosylation site" description="N-linked (GlcNAc...) asparagine" evidence="2">
    <location>
        <position position="6088"/>
    </location>
</feature>
<feature type="glycosylation site" description="N-linked (GlcNAc...) asparagine" evidence="2">
    <location>
        <position position="6732"/>
    </location>
</feature>
<feature type="glycosylation site" description="N-linked (GlcNAc...) asparagine" evidence="2">
    <location>
        <position position="6859"/>
    </location>
</feature>
<feature type="glycosylation site" description="N-linked (GlcNAc...) asparagine" evidence="2">
    <location>
        <position position="6961"/>
    </location>
</feature>
<feature type="glycosylation site" description="N-linked (GlcNAc...) asparagine" evidence="2">
    <location>
        <position position="8029"/>
    </location>
</feature>
<feature type="glycosylation site" description="N-linked (GlcNAc...) asparagine" evidence="2">
    <location>
        <position position="8055"/>
    </location>
</feature>
<feature type="glycosylation site" description="N-linked (GlcNAc...) asparagine" evidence="2">
    <location>
        <position position="8324"/>
    </location>
</feature>
<feature type="glycosylation site" description="N-linked (GlcNAc...) asparagine" evidence="2">
    <location>
        <position position="8618"/>
    </location>
</feature>
<feature type="glycosylation site" description="N-linked (GlcNAc...) asparagine" evidence="2">
    <location>
        <position position="8684"/>
    </location>
</feature>
<feature type="glycosylation site" description="N-linked (GlcNAc...) asparagine" evidence="2">
    <location>
        <position position="8913"/>
    </location>
</feature>
<feature type="glycosylation site" description="N-linked (GlcNAc...) asparagine" evidence="2">
    <location>
        <position position="9202"/>
    </location>
</feature>
<feature type="glycosylation site" description="N-linked (GlcNAc...) asparagine" evidence="2">
    <location>
        <position position="9493"/>
    </location>
</feature>
<feature type="glycosylation site" description="N-linked (GlcNAc...) asparagine" evidence="2">
    <location>
        <position position="9785"/>
    </location>
</feature>
<feature type="glycosylation site" description="N-linked (GlcNAc...) asparagine" evidence="2">
    <location>
        <position position="10075"/>
    </location>
</feature>
<feature type="glycosylation site" description="N-linked (GlcNAc...) asparagine" evidence="2">
    <location>
        <position position="10173"/>
    </location>
</feature>
<feature type="glycosylation site" description="N-linked (GlcNAc...) asparagine" evidence="2">
    <location>
        <position position="10510"/>
    </location>
</feature>
<feature type="glycosylation site" description="N-linked (GlcNAc...) asparagine" evidence="2">
    <location>
        <position position="10700"/>
    </location>
</feature>
<feature type="glycosylation site" description="N-linked (GlcNAc...) asparagine" evidence="2">
    <location>
        <position position="10749"/>
    </location>
</feature>
<feature type="glycosylation site" description="N-linked (GlcNAc...) asparagine" evidence="2">
    <location>
        <position position="11053"/>
    </location>
</feature>
<feature type="glycosylation site" description="N-linked (GlcNAc...) asparagine" evidence="2">
    <location>
        <position position="11224"/>
    </location>
</feature>
<feature type="glycosylation site" description="N-linked (GlcNAc...) asparagine" evidence="2">
    <location>
        <position position="11263"/>
    </location>
</feature>
<feature type="glycosylation site" description="N-linked (GlcNAc...) asparagine" evidence="2">
    <location>
        <position position="11367"/>
    </location>
</feature>
<feature type="glycosylation site" description="N-linked (GlcNAc...) asparagine" evidence="2">
    <location>
        <position position="11594"/>
    </location>
</feature>
<feature type="glycosylation site" description="N-linked (GlcNAc...) asparagine" evidence="2">
    <location>
        <position position="12079"/>
    </location>
</feature>
<feature type="glycosylation site" description="N-linked (GlcNAc...) asparagine" evidence="2">
    <location>
        <position position="12100"/>
    </location>
</feature>
<feature type="glycosylation site" description="N-linked (GlcNAc...) asparagine" evidence="2">
    <location>
        <position position="12116"/>
    </location>
</feature>
<feature type="glycosylation site" description="N-linked (GlcNAc...) asparagine" evidence="2">
    <location>
        <position position="12168"/>
    </location>
</feature>
<feature type="glycosylation site" description="N-linked (GlcNAc...) asparagine" evidence="2">
    <location>
        <position position="12235"/>
    </location>
</feature>
<feature type="glycosylation site" description="N-linked (GlcNAc...) asparagine" evidence="2">
    <location>
        <position position="12272"/>
    </location>
</feature>
<feature type="glycosylation site" description="N-linked (GlcNAc...) asparagine" evidence="2">
    <location>
        <position position="12393"/>
    </location>
</feature>
<feature type="glycosylation site" description="N-linked (GlcNAc...) asparagine" evidence="2">
    <location>
        <position position="12414"/>
    </location>
</feature>
<feature type="glycosylation site" description="N-linked (GlcNAc...) asparagine" evidence="2">
    <location>
        <position position="12430"/>
    </location>
</feature>
<feature type="glycosylation site" description="N-linked (GlcNAc...) asparagine" evidence="2">
    <location>
        <position position="12549"/>
    </location>
</feature>
<feature type="glycosylation site" description="N-linked (GlcNAc...) asparagine" evidence="2">
    <location>
        <position position="12570"/>
    </location>
</feature>
<feature type="glycosylation site" description="N-linked (GlcNAc...) asparagine" evidence="2">
    <location>
        <position position="12586"/>
    </location>
</feature>
<feature type="glycosylation site" description="N-linked (GlcNAc...) asparagine" evidence="2">
    <location>
        <position position="12704"/>
    </location>
</feature>
<feature type="glycosylation site" description="N-linked (GlcNAc...) asparagine" evidence="2">
    <location>
        <position position="12725"/>
    </location>
</feature>
<feature type="glycosylation site" description="N-linked (GlcNAc...) asparagine" evidence="2">
    <location>
        <position position="12741"/>
    </location>
</feature>
<feature type="glycosylation site" description="N-linked (GlcNAc...) asparagine" evidence="2">
    <location>
        <position position="12824"/>
    </location>
</feature>
<feature type="glycosylation site" description="N-linked (GlcNAc...) asparagine" evidence="2">
    <location>
        <position position="12860"/>
    </location>
</feature>
<feature type="glycosylation site" description="N-linked (GlcNAc...) asparagine" evidence="2">
    <location>
        <position position="12881"/>
    </location>
</feature>
<feature type="glycosylation site" description="N-linked (GlcNAc...) asparagine" evidence="2">
    <location>
        <position position="12897"/>
    </location>
</feature>
<feature type="glycosylation site" description="N-linked (GlcNAc...) asparagine" evidence="2">
    <location>
        <position position="13016"/>
    </location>
</feature>
<feature type="glycosylation site" description="N-linked (GlcNAc...) asparagine" evidence="2">
    <location>
        <position position="13037"/>
    </location>
</feature>
<feature type="glycosylation site" description="N-linked (GlcNAc...) asparagine" evidence="2">
    <location>
        <position position="13053"/>
    </location>
</feature>
<feature type="glycosylation site" description="N-linked (GlcNAc...) asparagine" evidence="2">
    <location>
        <position position="13172"/>
    </location>
</feature>
<feature type="glycosylation site" description="N-linked (GlcNAc...) asparagine" evidence="2">
    <location>
        <position position="13193"/>
    </location>
</feature>
<feature type="glycosylation site" description="N-linked (GlcNAc...) asparagine" evidence="2">
    <location>
        <position position="13328"/>
    </location>
</feature>
<feature type="glycosylation site" description="N-linked (GlcNAc...) asparagine" evidence="2">
    <location>
        <position position="13349"/>
    </location>
</feature>
<feature type="glycosylation site" description="N-linked (GlcNAc...) asparagine" evidence="2">
    <location>
        <position position="13365"/>
    </location>
</feature>
<feature type="glycosylation site" description="N-linked (GlcNAc...) asparagine" evidence="2">
    <location>
        <position position="13484"/>
    </location>
</feature>
<feature type="glycosylation site" description="N-linked (GlcNAc...) asparagine" evidence="2">
    <location>
        <position position="13505"/>
    </location>
</feature>
<feature type="glycosylation site" description="N-linked (GlcNAc...) asparagine" evidence="2">
    <location>
        <position position="13521"/>
    </location>
</feature>
<feature type="glycosylation site" description="N-linked (GlcNAc...) asparagine" evidence="2">
    <location>
        <position position="13640"/>
    </location>
</feature>
<feature type="glycosylation site" description="N-linked (GlcNAc...) asparagine" evidence="2">
    <location>
        <position position="13661"/>
    </location>
</feature>
<feature type="glycosylation site" description="N-linked (GlcNAc...) asparagine" evidence="2">
    <location>
        <position position="13733"/>
    </location>
</feature>
<feature type="glycosylation site" description="N-linked (GlcNAc...) asparagine" evidence="2">
    <location>
        <position position="13744"/>
    </location>
</feature>
<feature type="glycosylation site" description="N-linked (GlcNAc...) asparagine" evidence="2">
    <location>
        <position position="13796"/>
    </location>
</feature>
<feature type="glycosylation site" description="N-linked (GlcNAc...) asparagine" evidence="2">
    <location>
        <position position="13816"/>
    </location>
</feature>
<feature type="glycosylation site" description="N-linked (GlcNAc...) asparagine" evidence="2">
    <location>
        <position position="13832"/>
    </location>
</feature>
<feature type="glycosylation site" description="N-linked (GlcNAc...) asparagine" evidence="2">
    <location>
        <position position="13929"/>
    </location>
</feature>
<feature type="glycosylation site" description="N-linked (GlcNAc...) asparagine" evidence="2">
    <location>
        <position position="13950"/>
    </location>
</feature>
<feature type="glycosylation site" description="N-linked (GlcNAc...) asparagine" evidence="2">
    <location>
        <position position="14080"/>
    </location>
</feature>
<feature type="glycosylation site" description="N-linked (GlcNAc...) asparagine" evidence="2">
    <location>
        <position position="14100"/>
    </location>
</feature>
<feature type="glycosylation site" description="N-linked (GlcNAc...) asparagine" evidence="2">
    <location>
        <position position="14195"/>
    </location>
</feature>
<feature type="glycosylation site" description="N-linked (GlcNAc...) asparagine" evidence="2">
    <location>
        <position position="14212"/>
    </location>
</feature>
<feature type="glycosylation site" description="N-linked (GlcNAc...) asparagine" evidence="2">
    <location>
        <position position="14254"/>
    </location>
</feature>
<feature type="glycosylation site" description="N-linked (GlcNAc...) asparagine" evidence="2">
    <location>
        <position position="14287"/>
    </location>
</feature>
<feature type="glycosylation site" description="N-linked (GlcNAc...) asparagine" evidence="2">
    <location>
        <position position="14326"/>
    </location>
</feature>
<feature type="glycosylation site" description="N-linked (GlcNAc...) asparagine" evidence="2">
    <location>
        <position position="14363"/>
    </location>
</feature>
<feature type="glycosylation site" description="N-linked (GlcNAc...) asparagine" evidence="2">
    <location>
        <position position="14417"/>
    </location>
</feature>
<feature type="glycosylation site" description="N-linked (GlcNAc...) asparagine" evidence="2">
    <location>
        <position position="14423"/>
    </location>
</feature>
<feature type="disulfide bond" evidence="2">
    <location>
        <begin position="12126"/>
        <end position="12146"/>
    </location>
</feature>
<feature type="disulfide bond" evidence="2">
    <location>
        <begin position="12282"/>
        <end position="12302"/>
    </location>
</feature>
<feature type="disulfide bond" evidence="2">
    <location>
        <begin position="12440"/>
        <end position="12460"/>
    </location>
</feature>
<feature type="disulfide bond" evidence="2">
    <location>
        <begin position="12596"/>
        <end position="12616"/>
    </location>
</feature>
<feature type="disulfide bond" evidence="2">
    <location>
        <begin position="12751"/>
        <end position="12771"/>
    </location>
</feature>
<feature type="disulfide bond" evidence="2">
    <location>
        <begin position="12907"/>
        <end position="12927"/>
    </location>
</feature>
<feature type="disulfide bond" evidence="2">
    <location>
        <begin position="13063"/>
        <end position="13083"/>
    </location>
</feature>
<feature type="disulfide bond" evidence="2">
    <location>
        <begin position="13219"/>
        <end position="13239"/>
    </location>
</feature>
<feature type="disulfide bond" evidence="2">
    <location>
        <begin position="13375"/>
        <end position="13395"/>
    </location>
</feature>
<feature type="disulfide bond" evidence="2">
    <location>
        <begin position="13531"/>
        <end position="13551"/>
    </location>
</feature>
<feature type="disulfide bond" evidence="2">
    <location>
        <begin position="13687"/>
        <end position="13707"/>
    </location>
</feature>
<feature type="disulfide bond" evidence="2">
    <location>
        <begin position="13976"/>
        <end position="13996"/>
    </location>
</feature>
<feature type="disulfide bond" evidence="2">
    <location>
        <begin position="14126"/>
        <end position="14146"/>
    </location>
</feature>
<feature type="disulfide bond" evidence="2">
    <location>
        <begin position="14373"/>
        <end position="14393"/>
    </location>
</feature>
<feature type="sequence variant" id="VAR_056592" description="In dbSNP:rs17000957.">
    <original>T</original>
    <variation>A</variation>
    <location>
        <position position="545"/>
    </location>
</feature>
<feature type="sequence variant" id="VAR_056593" description="In dbSNP:rs17000950.">
    <original>R</original>
    <variation>G</variation>
    <location>
        <position position="1015"/>
    </location>
</feature>
<feature type="sequence variant" id="VAR_056594" description="In dbSNP:rs10411228.">
    <original>S</original>
    <variation>T</variation>
    <location>
        <position position="1032"/>
    </location>
</feature>
<feature type="sequence variant" id="VAR_056595" description="In dbSNP:rs10406202.">
    <original>P</original>
    <variation>S</variation>
    <location>
        <position position="1041"/>
    </location>
</feature>
<feature type="sequence variant" id="VAR_056596" description="In dbSNP:rs17000947.">
    <original>T</original>
    <variation>I</variation>
    <location>
        <position position="1162"/>
    </location>
</feature>
<feature type="sequence variant" id="VAR_056597" description="In dbSNP:rs1596797.">
    <original>K</original>
    <variation>N</variation>
    <location>
        <position position="1266"/>
    </location>
</feature>
<feature type="sequence variant" id="VAR_056598" description="In dbSNP:rs12611293.">
    <original>H</original>
    <variation>Y</variation>
    <location>
        <position position="1353"/>
    </location>
</feature>
<feature type="sequence variant" id="VAR_056599" description="In dbSNP:rs1596798.">
    <original>K</original>
    <variation>N</variation>
    <location>
        <position position="1400"/>
    </location>
</feature>
<feature type="sequence variant" id="VAR_056600" description="In dbSNP:rs4520945.">
    <original>L</original>
    <variation>F</variation>
    <location>
        <position position="1833"/>
    </location>
</feature>
<feature type="sequence variant" id="VAR_056601" description="In dbSNP:rs1108380.">
    <original>S</original>
    <variation>P</variation>
    <location>
        <position position="1953"/>
    </location>
</feature>
<feature type="sequence variant" id="VAR_056602" description="In dbSNP:rs1574479.">
    <original>S</original>
    <variation>P</variation>
    <location>
        <position position="2058"/>
    </location>
</feature>
<feature type="sequence variant" id="VAR_056603" description="In dbSNP:rs10407633.">
    <original>I</original>
    <variation>V</variation>
    <location>
        <position position="2150"/>
    </location>
</feature>
<feature type="sequence variant" id="VAR_056604" description="In dbSNP:rs11085805.">
    <original>T</original>
    <variation>A</variation>
    <location>
        <position position="2271"/>
    </location>
</feature>
<feature type="sequence variant" id="VAR_056605" description="In dbSNP:rs10410933.">
    <original>V</original>
    <variation>L</variation>
    <location>
        <position position="2288"/>
    </location>
</feature>
<feature type="sequence variant" id="VAR_056606" description="In dbSNP:rs10416013.">
    <original>D</original>
    <variation>E</variation>
    <location>
        <position position="2356"/>
    </location>
</feature>
<feature type="sequence variant" id="VAR_056607" description="In dbSNP:rs10402538.">
    <original>A</original>
    <variation>T</variation>
    <location>
        <position position="2747"/>
    </location>
</feature>
<feature type="sequence variant" id="VAR_056608" description="In dbSNP:rs17000886.">
    <original>M</original>
    <variation>I</variation>
    <location>
        <position position="2786"/>
    </location>
</feature>
<feature type="sequence variant" id="VAR_056609" description="In dbSNP:rs10407623.">
    <original>T</original>
    <variation>M</variation>
    <location>
        <position position="2834"/>
    </location>
</feature>
<feature type="sequence variant" id="VAR_056610" description="In dbSNP:rs2591594.">
    <original>R</original>
    <variation>H</variation>
    <location>
        <position position="3573"/>
    </location>
</feature>
<feature type="sequence variant" id="VAR_056611" description="In dbSNP:rs1559172.">
    <original>H</original>
    <variation>D</variation>
    <location>
        <position position="5741"/>
    </location>
</feature>
<feature type="sequence variant" id="VAR_056612" description="In dbSNP:rs1559171.">
    <original>A</original>
    <variation>T</variation>
    <location>
        <position position="5754"/>
    </location>
</feature>
<feature type="sequence variant" id="VAR_056613" description="In dbSNP:rs1862460.">
    <original>F</original>
    <variation>V</variation>
    <location>
        <position position="5852"/>
    </location>
</feature>
<feature type="sequence variant" id="VAR_056614" description="In dbSNP:rs17000770.">
    <original>T</original>
    <variation>A</variation>
    <location>
        <position position="7063"/>
    </location>
</feature>
<feature type="sequence variant" id="VAR_056615" description="In dbSNP:rs1867691.">
    <original>I</original>
    <variation>V</variation>
    <location>
        <position position="7272"/>
    </location>
</feature>
<feature type="sequence variant" id="VAR_056616" description="In dbSNP:rs11670461.">
    <original>T</original>
    <variation>N</variation>
    <location>
        <position position="10507"/>
    </location>
</feature>
<feature type="sequence conflict" description="In Ref. 2; AAL65133." evidence="14" ref="2">
    <original>Y</original>
    <variation>D</variation>
    <location>
        <position position="1898"/>
    </location>
</feature>
<feature type="sequence conflict" description="In Ref. 2; AAL65133." evidence="14" ref="2">
    <original>T</original>
    <variation>A</variation>
    <location>
        <position position="2506"/>
    </location>
</feature>
<feature type="sequence conflict" description="In Ref. 2; AAL65133." evidence="14" ref="2">
    <original>S</original>
    <variation>T</variation>
    <location>
        <position position="3190"/>
    </location>
</feature>
<feature type="sequence conflict" description="In Ref. 2; AAL65133." evidence="14" ref="2">
    <original>M</original>
    <variation>V</variation>
    <location>
        <position position="3202"/>
    </location>
</feature>
<feature type="sequence conflict" description="In Ref. 2; AAL65133." evidence="14" ref="2">
    <original>I</original>
    <variation>V</variation>
    <location>
        <position position="3932"/>
    </location>
</feature>
<feature type="sequence conflict" description="In Ref. 2; AAL65133." evidence="14" ref="2">
    <original>S</original>
    <variation>T</variation>
    <location>
        <position position="4440"/>
    </location>
</feature>
<feature type="sequence conflict" description="In Ref. 2; AAL65133." evidence="14" ref="2">
    <original>P</original>
    <variation>T</variation>
    <location>
        <position position="5682"/>
    </location>
</feature>
<feature type="sequence conflict" description="In Ref. 2; AAL65133." evidence="14" ref="2">
    <original>V</original>
    <variation>M</variation>
    <location>
        <position position="6303"/>
    </location>
</feature>
<feature type="sequence conflict" description="In Ref. 2; AAL65133." evidence="14" ref="2">
    <original>L</original>
    <variation>V</variation>
    <location>
        <position position="6655"/>
    </location>
</feature>
<feature type="sequence conflict" description="In Ref. 2; AAL65133." evidence="14" ref="2">
    <original>E</original>
    <variation>V</variation>
    <location>
        <position position="6866"/>
    </location>
</feature>
<feature type="sequence conflict" description="In Ref. 2; AAL65133." evidence="14" ref="2">
    <original>S</original>
    <variation>C</variation>
    <location>
        <position position="6895"/>
    </location>
</feature>
<feature type="sequence conflict" description="In Ref. 2; AAL65133." evidence="14" ref="2">
    <original>A</original>
    <variation>T</variation>
    <location>
        <position position="6906"/>
    </location>
</feature>
<feature type="sequence conflict" description="In Ref. 2; AAL65133." evidence="14" ref="2">
    <original>S</original>
    <variation>F</variation>
    <location>
        <position position="7191"/>
    </location>
</feature>
<feature type="sequence conflict" description="In Ref. 2; AAL65133." evidence="14" ref="2">
    <original>L</original>
    <variation>P</variation>
    <location>
        <position position="7425"/>
    </location>
</feature>
<feature type="sequence conflict" description="In Ref. 2; AAL65133." evidence="14" ref="2">
    <original>S</original>
    <variation>P</variation>
    <location>
        <position position="7475"/>
    </location>
</feature>
<feature type="sequence conflict" description="In Ref. 2; AAL65133." evidence="14" ref="2">
    <original>D</original>
    <variation>A</variation>
    <location>
        <position position="7923"/>
    </location>
</feature>
<feature type="sequence conflict" description="In Ref. 2; AAL65133 and 4; AAK74120." evidence="14" ref="2 4">
    <original>N</original>
    <variation>T</variation>
    <location>
        <position position="8301"/>
    </location>
</feature>
<feature type="sequence conflict" description="In Ref. 4; AAK74120." evidence="14" ref="4">
    <original>D</original>
    <variation>A</variation>
    <location>
        <position position="8344"/>
    </location>
</feature>
<feature type="sequence conflict" description="In Ref. 2; AAL65133." evidence="14" ref="2">
    <original>T</original>
    <variation>A</variation>
    <location>
        <position position="8578"/>
    </location>
</feature>
<feature type="sequence conflict" description="In Ref. 2; AAL65133." evidence="14" ref="2">
    <original>T</original>
    <variation>S</variation>
    <location>
        <position position="9059"/>
    </location>
</feature>
<feature type="sequence conflict" description="In Ref. 2; AAL65133." evidence="14" ref="2">
    <original>T</original>
    <variation>A</variation>
    <location>
        <position position="9072"/>
    </location>
</feature>
<feature type="sequence conflict" description="In Ref. 4; AAK74120." evidence="14" ref="4">
    <original>D</original>
    <variation>E</variation>
    <location>
        <position position="9129"/>
    </location>
</feature>
<feature type="sequence conflict" description="In Ref. 2; AAL65133 and 4; AAK74120." evidence="14" ref="2 4">
    <original>I</original>
    <variation>T</variation>
    <location>
        <position position="9213"/>
    </location>
</feature>
<feature type="sequence conflict" description="In Ref. 4; AAK74120." evidence="14" ref="4">
    <original>Q</original>
    <variation>R</variation>
    <location>
        <position position="9405"/>
    </location>
</feature>
<feature type="sequence conflict" description="In Ref. 2; AAL65133." evidence="14" ref="2">
    <original>A</original>
    <variation>T</variation>
    <location>
        <position position="9502"/>
    </location>
</feature>
<feature type="sequence conflict" description="In Ref. 2; AAL65133." evidence="14" ref="2">
    <original>P</original>
    <variation>S</variation>
    <location>
        <position position="9608"/>
    </location>
</feature>
<feature type="sequence conflict" description="In Ref. 4; AAK74120." evidence="14" ref="4">
    <original>D</original>
    <variation>E</variation>
    <location>
        <position position="9850"/>
    </location>
</feature>
<feature type="sequence conflict" description="In Ref. 4; AAK74120." evidence="14" ref="4">
    <original>Y</original>
    <variation>F</variation>
    <location>
        <position position="9899"/>
    </location>
</feature>
<feature type="sequence conflict" description="In Ref. 2; AAL65133 and 4; AAK74120." evidence="14" ref="2 4">
    <original>I</original>
    <variation>T</variation>
    <location>
        <position position="9920"/>
    </location>
</feature>
<feature type="sequence conflict" description="In Ref. 2; AAL65133 and 4; AAK74120." evidence="14" ref="2 4">
    <original>L</original>
    <variation>P</variation>
    <location>
        <position position="10013"/>
    </location>
</feature>
<feature type="sequence conflict" description="In Ref. 4; AAK74120." evidence="14" ref="4">
    <original>F</original>
    <variation>L</variation>
    <location>
        <position position="10169"/>
    </location>
</feature>
<feature type="sequence conflict" description="In Ref. 2; AAL65133." evidence="14" ref="2">
    <original>S</original>
    <variation>T</variation>
    <location>
        <position position="10394"/>
    </location>
</feature>
<feature type="sequence conflict" description="In Ref. 4; AAK74120." evidence="14" ref="4">
    <original>P</original>
    <variation>S</variation>
    <location>
        <position position="10828"/>
    </location>
</feature>
<feature type="sequence conflict" description="In Ref. 4; AAK74120." evidence="14" ref="4">
    <original>S</original>
    <variation>F</variation>
    <location>
        <position position="11154"/>
    </location>
</feature>
<feature type="sequence conflict" description="In Ref. 4; AAK74120." evidence="14" ref="4">
    <original>A</original>
    <variation>G</variation>
    <location>
        <position position="11199"/>
    </location>
</feature>
<feature type="sequence conflict" description="In Ref. 4; AAK74120." evidence="14" ref="4">
    <original>G</original>
    <variation>D</variation>
    <location>
        <position position="11455"/>
    </location>
</feature>
<feature type="sequence conflict" description="In Ref. 4; AAK74120." evidence="14" ref="4">
    <original>S</original>
    <variation>T</variation>
    <location>
        <position position="12514"/>
    </location>
</feature>
<feature type="sequence conflict" description="In Ref. 4; AAK74120." evidence="14" ref="4">
    <original>L</original>
    <variation>V</variation>
    <location>
        <position position="12580"/>
    </location>
</feature>
<feature type="sequence conflict" description="In Ref. 4; AAK74120." evidence="14" ref="4">
    <original>T</original>
    <variation>TSA</variation>
    <location>
        <position position="12692"/>
    </location>
</feature>
<feature type="sequence conflict" description="In Ref. 6; BAC87568." evidence="14" ref="6">
    <original>T</original>
    <variation>A</variation>
    <location>
        <position position="12832"/>
    </location>
</feature>
<feature type="sequence conflict" description="In Ref. 6; BAC87568." evidence="14" ref="6">
    <original>D</original>
    <variation>H</variation>
    <location>
        <position position="12834"/>
    </location>
</feature>
<feature type="sequence conflict" description="In Ref. 6; BAC87568." evidence="14" ref="6">
    <original>G</original>
    <variation>E</variation>
    <location>
        <position position="12836"/>
    </location>
</feature>
<feature type="sequence conflict" description="In Ref. 6; BAC87568." evidence="14" ref="6">
    <original>S</original>
    <variation>A</variation>
    <location>
        <position position="12842"/>
    </location>
</feature>
<feature type="sequence conflict" description="In Ref. 6; BAC87568." evidence="14" ref="6">
    <original>SP</original>
    <variation>GH</variation>
    <location>
        <begin position="12846"/>
        <end position="12847"/>
    </location>
</feature>
<feature type="sequence conflict" description="In Ref. 6; BAC87568." evidence="14" ref="6">
    <original>SA</original>
    <variation>AP</variation>
    <location>
        <begin position="12849"/>
        <end position="12850"/>
    </location>
</feature>
<feature type="sequence conflict" description="In Ref. 6; BAC87568." evidence="14" ref="6">
    <original>H</original>
    <variation>R</variation>
    <location>
        <position position="12873"/>
    </location>
</feature>
<feature type="sequence conflict" description="In Ref. 6; BAC87568." evidence="14" ref="6">
    <original>GPM</original>
    <variation>KPL</variation>
    <location>
        <begin position="12892"/>
        <end position="12894"/>
    </location>
</feature>
<feature type="sequence conflict" description="In Ref. 6; BAC87568." evidence="14" ref="6">
    <original>N</original>
    <variation>S</variation>
    <location>
        <position position="12897"/>
    </location>
</feature>
<feature type="sequence conflict" description="In Ref. 6; BAC87568." evidence="14" ref="6">
    <original>L</original>
    <variation>P</variation>
    <location>
        <position position="12902"/>
    </location>
</feature>
<feature type="sequence conflict" description="In Ref. 6; BAC87568." evidence="14" ref="6">
    <original>N</original>
    <variation>R</variation>
    <location>
        <position position="12917"/>
    </location>
</feature>
<feature type="sequence conflict" description="In Ref. 6; BAC87568." evidence="14" ref="6">
    <original>MDA</original>
    <variation>VDT</variation>
    <location>
        <begin position="12923"/>
        <end position="12925"/>
    </location>
</feature>
<feature type="sequence conflict" description="In Ref. 6; BAC87568." evidence="14" ref="6">
    <original>S</original>
    <variation>T</variation>
    <location>
        <position position="12928"/>
    </location>
</feature>
<feature type="sequence conflict" description="In Ref. 6; BAC87568." evidence="14" ref="6">
    <original>KS</original>
    <variation>LN</variation>
    <location>
        <begin position="12934"/>
        <end position="12935"/>
    </location>
</feature>
<feature type="sequence conflict" description="In Ref. 6; BAC87568." evidence="14" ref="6">
    <original>N</original>
    <variation>D</variation>
    <location>
        <position position="12939"/>
    </location>
</feature>
<feature type="sequence conflict" description="In Ref. 6; BAC87568." evidence="14" ref="6">
    <original>Q</original>
    <variation>K</variation>
    <location>
        <position position="12949"/>
    </location>
</feature>
<feature type="sequence conflict" description="In Ref. 6; BAC87568." evidence="14" ref="6">
    <original>H</original>
    <variation>R</variation>
    <location>
        <position position="12952"/>
    </location>
</feature>
<feature type="sequence conflict" description="In Ref. 6; BAC87568." evidence="14" ref="6">
    <original>K</original>
    <variation>I</variation>
    <location>
        <position position="12955"/>
    </location>
</feature>
<feature type="sequence conflict" description="In Ref. 6; BAC87568." evidence="14" ref="6">
    <original>T</original>
    <variation>L</variation>
    <location>
        <position position="12961"/>
    </location>
</feature>
<feature type="sequence conflict" description="In Ref. 6; BAC87568." evidence="14" ref="6">
    <original>N</original>
    <variation>G</variation>
    <location>
        <position position="12965"/>
    </location>
</feature>
<feature type="sequence conflict" description="In Ref. 6; BAC87568." evidence="14" ref="6">
    <original>SS</original>
    <variation>NF</variation>
    <location>
        <begin position="12976"/>
        <end position="12977"/>
    </location>
</feature>
<feature type="sequence conflict" description="In Ref. 6; BAC87568." evidence="14" ref="6">
    <original>AP</original>
    <variation>PI</variation>
    <location>
        <begin position="12979"/>
        <end position="12980"/>
    </location>
</feature>
<feature type="sequence conflict" description="In Ref. 6; BAC87568." evidence="14" ref="6">
    <original>D</original>
    <variation>H</variation>
    <location>
        <position position="12990"/>
    </location>
</feature>
<feature type="sequence conflict" description="In Ref. 6; BAC87568." evidence="14" ref="6">
    <original>G</original>
    <variation>E</variation>
    <location>
        <position position="12995"/>
    </location>
</feature>
<feature type="sequence conflict" description="In Ref. 6; BAC87568." evidence="14" ref="6">
    <original>SPTTAV</original>
    <variation>RPIVPG</variation>
    <location>
        <begin position="13002"/>
        <end position="13007"/>
    </location>
</feature>
<feature type="sequence conflict" description="In Ref. 6; BAC87568." evidence="14" ref="6">
    <original>GED</original>
    <variation>EEA</variation>
    <location>
        <begin position="13025"/>
        <end position="13027"/>
    </location>
</feature>
<feature type="sequence conflict" description="In Ref. 6; BAC87568." evidence="14" ref="6">
    <original>G</original>
    <variation>R</variation>
    <location>
        <position position="13048"/>
    </location>
</feature>
<feature type="sequence conflict" description="In Ref. 6; BAC87568." evidence="14" ref="6">
    <original>SSV</original>
    <variation>TSI</variation>
    <location>
        <begin position="13054"/>
        <end position="13056"/>
    </location>
</feature>
<feature type="sequence conflict" description="In Ref. 6; BAC87568." evidence="14" ref="6">
    <original>G</original>
    <variation>S</variation>
    <location>
        <position position="13062"/>
    </location>
</feature>
<feature type="sequence conflict" description="In Ref. 4; AAK74120." evidence="14" ref="4">
    <original>T</original>
    <variation>I</variation>
    <location>
        <position position="13332"/>
    </location>
</feature>
<feature type="sequence conflict" description="In Ref. 4; AAK74120." evidence="14" ref="4">
    <original>R</original>
    <variation>H</variation>
    <location>
        <position position="13341"/>
    </location>
</feature>
<feature type="sequence conflict" description="In Ref. 6; BAC87568." evidence="14" ref="6">
    <original>G</original>
    <variation>K</variation>
    <location>
        <position position="13386"/>
    </location>
</feature>
<feature type="sequence conflict" description="In Ref. 6; BAC87568." evidence="14" ref="6">
    <original>V</original>
    <variation>I</variation>
    <location>
        <position position="13394"/>
    </location>
</feature>
<feature type="sequence conflict" description="In Ref. 6; BAC87568." evidence="14" ref="6">
    <original>R</original>
    <variation>H</variation>
    <location>
        <position position="13398"/>
    </location>
</feature>
<feature type="sequence conflict" description="In Ref. 6; BAC87568." evidence="14" ref="6">
    <original>K</original>
    <variation>Q</variation>
    <location>
        <position position="13402"/>
    </location>
</feature>
<feature type="sequence conflict" description="In Ref. 6; BAC87568." evidence="14" ref="6">
    <original>D</original>
    <variation>N</variation>
    <location>
        <position position="13407"/>
    </location>
</feature>
<feature type="sequence conflict" description="In Ref. 6; BAC87568." evidence="14" ref="6">
    <original>R</original>
    <variation>Q</variation>
    <location>
        <position position="13410"/>
    </location>
</feature>
<feature type="sequence conflict" description="In Ref. 6; BAC87568." evidence="14" ref="6">
    <original>K</original>
    <variation>E</variation>
    <location>
        <position position="13414"/>
    </location>
</feature>
<feature type="sequence conflict" description="In Ref. 6; BAC87568 and 4; AAK74120." evidence="14" ref="6 4">
    <original>M</original>
    <variation>T</variation>
    <location>
        <position position="13472"/>
    </location>
</feature>
<feature type="sequence conflict" description="In Ref. 6; BAC87568." evidence="14" ref="6">
    <original>YNEPGPDEPP</original>
    <variation>HHTLQRQSTT</variation>
    <location>
        <begin position="14041"/>
        <end position="14050"/>
    </location>
</feature>
<feature type="sequence conflict" description="In Ref. 4; AAK74120." evidence="14" ref="4">
    <original>V</original>
    <variation>L</variation>
    <location>
        <position position="14466"/>
    </location>
</feature>
<feature type="strand" evidence="17">
    <location>
        <begin position="12699"/>
        <end position="12707"/>
    </location>
</feature>
<feature type="helix" evidence="17">
    <location>
        <begin position="12714"/>
        <end position="12717"/>
    </location>
</feature>
<feature type="helix" evidence="17">
    <location>
        <begin position="12722"/>
        <end position="12740"/>
    </location>
</feature>
<feature type="helix" evidence="17">
    <location>
        <begin position="12745"/>
        <end position="12747"/>
    </location>
</feature>
<feature type="strand" evidence="17">
    <location>
        <begin position="12748"/>
        <end position="12759"/>
    </location>
</feature>
<feature type="helix" evidence="17">
    <location>
        <begin position="12760"/>
        <end position="12762"/>
    </location>
</feature>
<feature type="strand" evidence="17">
    <location>
        <begin position="12764"/>
        <end position="12773"/>
    </location>
</feature>
<feature type="helix" evidence="17">
    <location>
        <begin position="12784"/>
        <end position="12794"/>
    </location>
</feature>
<feature type="turn" evidence="17">
    <location>
        <begin position="12795"/>
        <end position="12799"/>
    </location>
</feature>
<feature type="strand" evidence="17">
    <location>
        <begin position="12804"/>
        <end position="12806"/>
    </location>
</feature>
<feature type="helix" evidence="18">
    <location>
        <begin position="13475"/>
        <end position="13477"/>
    </location>
</feature>
<feature type="strand" evidence="18">
    <location>
        <begin position="13479"/>
        <end position="13487"/>
    </location>
</feature>
<feature type="helix" evidence="18">
    <location>
        <begin position="13494"/>
        <end position="13496"/>
    </location>
</feature>
<feature type="helix" evidence="18">
    <location>
        <begin position="13502"/>
        <end position="13520"/>
    </location>
</feature>
<feature type="strand" evidence="18">
    <location>
        <begin position="13528"/>
        <end position="13539"/>
    </location>
</feature>
<feature type="helix" evidence="18">
    <location>
        <begin position="13540"/>
        <end position="13542"/>
    </location>
</feature>
<feature type="strand" evidence="18">
    <location>
        <begin position="13544"/>
        <end position="13553"/>
    </location>
</feature>
<feature type="helix" evidence="18">
    <location>
        <begin position="13564"/>
        <end position="13574"/>
    </location>
</feature>
<feature type="turn" evidence="18">
    <location>
        <begin position="13575"/>
        <end position="13579"/>
    </location>
</feature>
<evidence type="ECO:0000250" key="1"/>
<evidence type="ECO:0000255" key="2"/>
<evidence type="ECO:0000255" key="3">
    <source>
        <dbReference type="PROSITE-ProRule" id="PRU00188"/>
    </source>
</evidence>
<evidence type="ECO:0000256" key="4">
    <source>
        <dbReference type="SAM" id="MobiDB-lite"/>
    </source>
</evidence>
<evidence type="ECO:0000269" key="5">
    <source>
    </source>
</evidence>
<evidence type="ECO:0000269" key="6">
    <source>
    </source>
</evidence>
<evidence type="ECO:0000269" key="7">
    <source>
    </source>
</evidence>
<evidence type="ECO:0000269" key="8">
    <source>
    </source>
</evidence>
<evidence type="ECO:0000269" key="9">
    <source>
    </source>
</evidence>
<evidence type="ECO:0000269" key="10">
    <source>
    </source>
</evidence>
<evidence type="ECO:0000303" key="11">
    <source>
    </source>
</evidence>
<evidence type="ECO:0000303" key="12">
    <source>
    </source>
</evidence>
<evidence type="ECO:0000303" key="13">
    <source>
    </source>
</evidence>
<evidence type="ECO:0000305" key="14"/>
<evidence type="ECO:0000305" key="15">
    <source>
    </source>
</evidence>
<evidence type="ECO:0000312" key="16">
    <source>
        <dbReference type="HGNC" id="HGNC:15582"/>
    </source>
</evidence>
<evidence type="ECO:0007829" key="17">
    <source>
        <dbReference type="PDB" id="7SA9"/>
    </source>
</evidence>
<evidence type="ECO:0007829" key="18">
    <source>
        <dbReference type="PDB" id="8VM1"/>
    </source>
</evidence>
<name>MUC16_HUMAN</name>
<keyword id="KW-0002">3D-structure</keyword>
<keyword id="KW-1003">Cell membrane</keyword>
<keyword id="KW-0903">Direct protein sequencing</keyword>
<keyword id="KW-1015">Disulfide bond</keyword>
<keyword id="KW-0325">Glycoprotein</keyword>
<keyword id="KW-0472">Membrane</keyword>
<keyword id="KW-0597">Phosphoprotein</keyword>
<keyword id="KW-1267">Proteomics identification</keyword>
<keyword id="KW-1185">Reference proteome</keyword>
<keyword id="KW-0677">Repeat</keyword>
<keyword id="KW-0964">Secreted</keyword>
<keyword id="KW-0812">Transmembrane</keyword>
<keyword id="KW-1133">Transmembrane helix</keyword>
<gene>
    <name evidence="16" type="primary">MUC16</name>
    <name evidence="12" type="synonym">CA125</name>
</gene>
<reference key="1">
    <citation type="journal article" date="2004" name="Nature">
        <title>The DNA sequence and biology of human chromosome 19.</title>
        <authorList>
            <person name="Grimwood J."/>
            <person name="Gordon L.A."/>
            <person name="Olsen A.S."/>
            <person name="Terry A."/>
            <person name="Schmutz J."/>
            <person name="Lamerdin J.E."/>
            <person name="Hellsten U."/>
            <person name="Goodstein D."/>
            <person name="Couronne O."/>
            <person name="Tran-Gyamfi M."/>
            <person name="Aerts A."/>
            <person name="Altherr M."/>
            <person name="Ashworth L."/>
            <person name="Bajorek E."/>
            <person name="Black S."/>
            <person name="Branscomb E."/>
            <person name="Caenepeel S."/>
            <person name="Carrano A.V."/>
            <person name="Caoile C."/>
            <person name="Chan Y.M."/>
            <person name="Christensen M."/>
            <person name="Cleland C.A."/>
            <person name="Copeland A."/>
            <person name="Dalin E."/>
            <person name="Dehal P."/>
            <person name="Denys M."/>
            <person name="Detter J.C."/>
            <person name="Escobar J."/>
            <person name="Flowers D."/>
            <person name="Fotopulos D."/>
            <person name="Garcia C."/>
            <person name="Georgescu A.M."/>
            <person name="Glavina T."/>
            <person name="Gomez M."/>
            <person name="Gonzales E."/>
            <person name="Groza M."/>
            <person name="Hammon N."/>
            <person name="Hawkins T."/>
            <person name="Haydu L."/>
            <person name="Ho I."/>
            <person name="Huang W."/>
            <person name="Israni S."/>
            <person name="Jett J."/>
            <person name="Kadner K."/>
            <person name="Kimball H."/>
            <person name="Kobayashi A."/>
            <person name="Larionov V."/>
            <person name="Leem S.-H."/>
            <person name="Lopez F."/>
            <person name="Lou Y."/>
            <person name="Lowry S."/>
            <person name="Malfatti S."/>
            <person name="Martinez D."/>
            <person name="McCready P.M."/>
            <person name="Medina C."/>
            <person name="Morgan J."/>
            <person name="Nelson K."/>
            <person name="Nolan M."/>
            <person name="Ovcharenko I."/>
            <person name="Pitluck S."/>
            <person name="Pollard M."/>
            <person name="Popkie A.P."/>
            <person name="Predki P."/>
            <person name="Quan G."/>
            <person name="Ramirez L."/>
            <person name="Rash S."/>
            <person name="Retterer J."/>
            <person name="Rodriguez A."/>
            <person name="Rogers S."/>
            <person name="Salamov A."/>
            <person name="Salazar A."/>
            <person name="She X."/>
            <person name="Smith D."/>
            <person name="Slezak T."/>
            <person name="Solovyev V."/>
            <person name="Thayer N."/>
            <person name="Tice H."/>
            <person name="Tsai M."/>
            <person name="Ustaszewska A."/>
            <person name="Vo N."/>
            <person name="Wagner M."/>
            <person name="Wheeler J."/>
            <person name="Wu K."/>
            <person name="Xie G."/>
            <person name="Yang J."/>
            <person name="Dubchak I."/>
            <person name="Furey T.S."/>
            <person name="DeJong P."/>
            <person name="Dickson M."/>
            <person name="Gordon D."/>
            <person name="Eichler E.E."/>
            <person name="Pennacchio L.A."/>
            <person name="Richardson P."/>
            <person name="Stubbs L."/>
            <person name="Rokhsar D.S."/>
            <person name="Myers R.M."/>
            <person name="Rubin E.M."/>
            <person name="Lucas S.M."/>
        </authorList>
    </citation>
    <scope>NUCLEOTIDE SEQUENCE [LARGE SCALE GENOMIC DNA]</scope>
</reference>
<reference key="2">
    <citation type="journal article" date="2002" name="Tumor Biol.">
        <title>The CA 125 gene: a newly discovered extension of the glycosylated N-terminal domain doubles the size of this extracellular superstructure.</title>
        <authorList>
            <person name="O'Brien T.J."/>
            <person name="Beard J.B."/>
            <person name="Underwood L.J."/>
            <person name="Shigemasa K."/>
        </authorList>
    </citation>
    <scope>NUCLEOTIDE SEQUENCE [MRNA] OF 1-10429</scope>
    <scope>SEQUENCE REVISION TO N-TERMINUS</scope>
    <scope>TISSUE SPECIFICITY</scope>
    <scope>INDUCTION</scope>
</reference>
<reference key="3">
    <citation type="journal article" date="2001" name="Tumor Biol.">
        <title>The CA 125 gene: an extracellular superstructure dominated by repeat sequences.</title>
        <authorList>
            <person name="O'Brien T.J."/>
            <person name="Beard J.B."/>
            <person name="Underwood L.J."/>
            <person name="Dennis R.A."/>
            <person name="Santin A.D."/>
            <person name="York L."/>
        </authorList>
    </citation>
    <scope>NUCLEOTIDE SEQUENCE [MRNA] OF 10430-14507</scope>
    <scope>REGION</scope>
    <scope>POLYMORPHISM</scope>
</reference>
<reference key="4">
    <citation type="journal article" date="2001" name="J. Biol. Chem.">
        <title>Molecular cloning of the CA125 ovarian cancer antigen: identification as a new mucin, MUC16.</title>
        <authorList>
            <person name="Yin B.W.T."/>
            <person name="Lloyd K.O."/>
        </authorList>
    </citation>
    <scope>NUCLEOTIDE SEQUENCE [MRNA] OF 8295-14507</scope>
    <scope>PROTEIN SEQUENCE OF 13715-13720 AND 14338-14350</scope>
    <scope>TISSUE SPECIFICITY</scope>
</reference>
<reference key="5">
    <citation type="submission" date="2003-09" db="EMBL/GenBank/DDBJ databases">
        <authorList>
            <person name="Lloyd K.O."/>
            <person name="Yin B.W.T."/>
        </authorList>
    </citation>
    <scope>SEQUENCE REVISION</scope>
</reference>
<reference key="6">
    <citation type="journal article" date="2004" name="Nat. Genet.">
        <title>Complete sequencing and characterization of 21,243 full-length human cDNAs.</title>
        <authorList>
            <person name="Ota T."/>
            <person name="Suzuki Y."/>
            <person name="Nishikawa T."/>
            <person name="Otsuki T."/>
            <person name="Sugiyama T."/>
            <person name="Irie R."/>
            <person name="Wakamatsu A."/>
            <person name="Hayashi K."/>
            <person name="Sato H."/>
            <person name="Nagai K."/>
            <person name="Kimura K."/>
            <person name="Makita H."/>
            <person name="Sekine M."/>
            <person name="Obayashi M."/>
            <person name="Nishi T."/>
            <person name="Shibahara T."/>
            <person name="Tanaka T."/>
            <person name="Ishii S."/>
            <person name="Yamamoto J."/>
            <person name="Saito K."/>
            <person name="Kawai Y."/>
            <person name="Isono Y."/>
            <person name="Nakamura Y."/>
            <person name="Nagahari K."/>
            <person name="Murakami K."/>
            <person name="Yasuda T."/>
            <person name="Iwayanagi T."/>
            <person name="Wagatsuma M."/>
            <person name="Shiratori A."/>
            <person name="Sudo H."/>
            <person name="Hosoiri T."/>
            <person name="Kaku Y."/>
            <person name="Kodaira H."/>
            <person name="Kondo H."/>
            <person name="Sugawara M."/>
            <person name="Takahashi M."/>
            <person name="Kanda K."/>
            <person name="Yokoi T."/>
            <person name="Furuya T."/>
            <person name="Kikkawa E."/>
            <person name="Omura Y."/>
            <person name="Abe K."/>
            <person name="Kamihara K."/>
            <person name="Katsuta N."/>
            <person name="Sato K."/>
            <person name="Tanikawa M."/>
            <person name="Yamazaki M."/>
            <person name="Ninomiya K."/>
            <person name="Ishibashi T."/>
            <person name="Yamashita H."/>
            <person name="Murakawa K."/>
            <person name="Fujimori K."/>
            <person name="Tanai H."/>
            <person name="Kimata M."/>
            <person name="Watanabe M."/>
            <person name="Hiraoka S."/>
            <person name="Chiba Y."/>
            <person name="Ishida S."/>
            <person name="Ono Y."/>
            <person name="Takiguchi S."/>
            <person name="Watanabe S."/>
            <person name="Yosida M."/>
            <person name="Hotuta T."/>
            <person name="Kusano J."/>
            <person name="Kanehori K."/>
            <person name="Takahashi-Fujii A."/>
            <person name="Hara H."/>
            <person name="Tanase T.-O."/>
            <person name="Nomura Y."/>
            <person name="Togiya S."/>
            <person name="Komai F."/>
            <person name="Hara R."/>
            <person name="Takeuchi K."/>
            <person name="Arita M."/>
            <person name="Imose N."/>
            <person name="Musashino K."/>
            <person name="Yuuki H."/>
            <person name="Oshima A."/>
            <person name="Sasaki N."/>
            <person name="Aotsuka S."/>
            <person name="Yoshikawa Y."/>
            <person name="Matsunawa H."/>
            <person name="Ichihara T."/>
            <person name="Shiohata N."/>
            <person name="Sano S."/>
            <person name="Moriya S."/>
            <person name="Momiyama H."/>
            <person name="Satoh N."/>
            <person name="Takami S."/>
            <person name="Terashima Y."/>
            <person name="Suzuki O."/>
            <person name="Nakagawa S."/>
            <person name="Senoh A."/>
            <person name="Mizoguchi H."/>
            <person name="Goto Y."/>
            <person name="Shimizu F."/>
            <person name="Wakebe H."/>
            <person name="Hishigaki H."/>
            <person name="Watanabe T."/>
            <person name="Sugiyama A."/>
            <person name="Takemoto M."/>
            <person name="Kawakami B."/>
            <person name="Yamazaki M."/>
            <person name="Watanabe K."/>
            <person name="Kumagai A."/>
            <person name="Itakura S."/>
            <person name="Fukuzumi Y."/>
            <person name="Fujimori Y."/>
            <person name="Komiyama M."/>
            <person name="Tashiro H."/>
            <person name="Tanigami A."/>
            <person name="Fujiwara T."/>
            <person name="Ono T."/>
            <person name="Yamada K."/>
            <person name="Fujii Y."/>
            <person name="Ozaki K."/>
            <person name="Hirao M."/>
            <person name="Ohmori Y."/>
            <person name="Kawabata A."/>
            <person name="Hikiji T."/>
            <person name="Kobatake N."/>
            <person name="Inagaki H."/>
            <person name="Ikema Y."/>
            <person name="Okamoto S."/>
            <person name="Okitani R."/>
            <person name="Kawakami T."/>
            <person name="Noguchi S."/>
            <person name="Itoh T."/>
            <person name="Shigeta K."/>
            <person name="Senba T."/>
            <person name="Matsumura K."/>
            <person name="Nakajima Y."/>
            <person name="Mizuno T."/>
            <person name="Morinaga M."/>
            <person name="Sasaki M."/>
            <person name="Togashi T."/>
            <person name="Oyama M."/>
            <person name="Hata H."/>
            <person name="Watanabe M."/>
            <person name="Komatsu T."/>
            <person name="Mizushima-Sugano J."/>
            <person name="Satoh T."/>
            <person name="Shirai Y."/>
            <person name="Takahashi Y."/>
            <person name="Nakagawa K."/>
            <person name="Okumura K."/>
            <person name="Nagase T."/>
            <person name="Nomura N."/>
            <person name="Kikuchi H."/>
            <person name="Masuho Y."/>
            <person name="Yamashita R."/>
            <person name="Nakai K."/>
            <person name="Yada T."/>
            <person name="Nakamura Y."/>
            <person name="Ohara O."/>
            <person name="Isogai T."/>
            <person name="Sugano S."/>
        </authorList>
    </citation>
    <scope>NUCLEOTIDE SEQUENCE [LARGE SCALE MRNA] OF 12828-14050</scope>
    <source>
        <tissue>Uterus</tissue>
    </source>
</reference>
<reference key="7">
    <citation type="journal article" date="1997" name="Tumor Biol.">
        <title>CA125 phosphorylation is associated with its secretion from the WISH human amnion cell line.</title>
        <authorList>
            <person name="Fendrick J.L."/>
            <person name="Konishi I."/>
            <person name="Geary S.M."/>
            <person name="Parmley T.H."/>
            <person name="Quirk J.G. Jr."/>
            <person name="O'Brien T.J."/>
        </authorList>
    </citation>
    <scope>PHOSPHORYLATION</scope>
</reference>
<reference key="8">
    <citation type="journal article" date="2003" name="J. Biol. Chem.">
        <title>Characterization of the oligosaccharides associated with the human ovarian tumor marker CA125.</title>
        <authorList>
            <person name="Kui Wong N."/>
            <person name="Easton R.L."/>
            <person name="Panico M."/>
            <person name="Sutton-Smith M."/>
            <person name="Morrison J.C."/>
            <person name="Lattanzio F.A."/>
            <person name="Morris H.R."/>
            <person name="Clark G.F."/>
            <person name="Dell A."/>
            <person name="Patankar M.S."/>
        </authorList>
    </citation>
    <scope>GLYCOSYLATION</scope>
</reference>
<reference key="9">
    <citation type="journal article" date="2004" name="J. Biol. Chem.">
        <title>Binding of ovarian cancer antigen CA125/MUC16 to mesothelin mediates cell adhesion.</title>
        <authorList>
            <person name="Rump A."/>
            <person name="Morikawa Y."/>
            <person name="Tanaka M."/>
            <person name="Minami S."/>
            <person name="Umesaki N."/>
            <person name="Takeuchi M."/>
            <person name="Miyajima A."/>
        </authorList>
    </citation>
    <scope>INTERACTION WITH MSLN</scope>
</reference>
<reference key="10">
    <citation type="journal article" date="2005" name="Biol. Res. Nurs.">
        <title>Introducing the MUC16 gene: implications for prevention and early detection in epithelial ovarian cancer.</title>
        <authorList>
            <person name="McLemore M.R."/>
            <person name="Aouizerat B."/>
        </authorList>
    </citation>
    <scope>REVIEW</scope>
    <scope>POLYMORPHISM</scope>
</reference>
<reference key="11">
    <citation type="journal article" date="2006" name="Invest. Ophthalmol. Vis. Sci.">
        <title>Mucin characteristics of human corneal-limbal epithelial cells that exclude the rose bengal anionic dye.</title>
        <authorList>
            <person name="Argueso P."/>
            <person name="Tisdale A."/>
            <person name="Spurr-Michaud S."/>
            <person name="Sumiyoshi M."/>
            <person name="Gipson I.K."/>
        </authorList>
    </citation>
    <scope>TISSUE SPECIFICITY</scope>
</reference>
<sequence>MLKPSGLPGSSSPTRSLMTGSRSTKATPEMDSGLTGATLSPKTSTGAIVVTEHTLPFTSPDKTLASPTSSVVGRTTQSLGVMSSALPESTSRGMTHSEQRTSPSLSPQVNGTPSRNYPATSMVSGLSSPRTRTSSTEGNFTKEASTYTLTVETTSGPVTEKYTVPTETSTTEGDSTETPWDTRYIPVKITSPMKTFADSTASKENAPVSMTPAETTVTDSHTPGRTNPSFGTLYSSFLDLSPKGTPNSRGETSLELILSTTGYPFSSPEPGSAGHSRISTSAPLSSSASVLDNKISETSIFSGQSLTSPLSPGVPEARASTMPNSAIPFSMTLSNAETSAERVRSTISSLGTPSISTKQTAETILTFHAFAETMDIPSTHIAKTLASEWLGSPGTLGGTSTSALTTTSPSTTLVSEETNTHHSTSGKETEGTLNTSMTPLETSAPGEESEMTATLVPTLGFTTLDSKIRSPSQVSSSHPTRELRTTGSTSGRQSSSTAAHGSSDILRATTSSTSKASSWTSESTAQQFSEPQHTQWVETSPSMKTERPPASTSVAAPITTSVPSVVSGFTTLKTSSTKGIWLEETSADTLIGESTAGPTTHQFAVPTGISMTGGSSTRGSQGTTHLLTRATASSETSADLTLATNGVPVSVSPAVSKTAAGSSPPGGTKPSYTMVSSVIPETSSLQSSAFREGTSLGLTPLNTRHPFSSPEPDSAGHTKISTSIPLLSSASVLEDKVSATSTFSHHKATSSITTGTPEISTKTKPSSAVLSSMTLSNAATSPERVRNATSPLTHPSPSGEETAGSVLTLSTSAETTDSPNIHPTGTLTSESSESPSTLSLPSVSGVKTTFSSSTPSTHLFTSGEETEETSNPSVSQPETSVSRVRTTLASTSVPTPVFPTMDTWPTRSAQFSSSHLVSELRATSSTSVTNSTGSALPKISHLTGTATMSQTNRDTFNDSAAPQSTTWPETSPRFKTGLPSATTTVSTSATSLSATVMVSKFTSPATSSMEATSIREPSTTILTTETTNGPGSMAVASTNIPIGKGYITEGRLDTSHLPIGTTASSETSMDFTMAKESVSMSVSPSQSMDAAGSSTPGRTSQFVDTFSDDVYHLTSREITIPRDGTSSALTPQMTATHPPSPDPGSARSTWLGILSSSPSSPTPKVTMSSTFSTQRVTTSMIMDTVETSRWNMPNLPSTTSLTPSNIPTSGAIGKSTLVPLDTPSPATSLEASEGGLPTLSTYPESTNTPSIHLGAHASSESPSTIKLTMASVVKPGSYTPLTFPSIETHIHVSTARMAYSSGSSPEMTAPGETNTGSTWDPTTYITTTDPKDTSSAQVSTPHSVRTLRTTENHPKTESATPAAYSGSPKISSSPNLTSPATKAWTITDTTEHSTQLHYTKLAEKSSGFETQSAPGPVSVVIPTSPTIGSSTLELTSDVPGEPLVLAPSEQTTITLPMATWLSTSLTEEMASTDLDISSPSSPMSTFAIFPPMSTPSHELSKSEADTSAIRNTDSTTLDQHLGIRSLGRTGDLTTVPITPLTTTWTSVIEHSTQAQDTLSATMSPTHVTQSLKDQTSIPASASPSHLTEVYPELGTQGRSSSEATTFWKPSTDTLSREIETGPTNIQSTPPMDNTTTGSSSSGVTLGIAHLPIGTSSPAETSTNMALERRSSTATVSMAGTMGLLVTSAPGRSISQSLGRVSSVLSESTTEGVTDSSKGSSPRLNTQGNTALSSSLEPSYAEGSQMSTSIPLTSSPTTPDVEFIGGSTFWTKEVTTVMTSDISKSSARTESSSATLMSTALGSTENTGKEKLRTASMDLPSPTPSMEVTPWISLTLSNAPNTTDSLDLSHGVHTSSAGTLATDRSLNTGVTRASRLENGSDTSSKSLSMGNSTHTSMTYTEKSEVSSSIHPRPETSAPGAETTLTSTPGNRAISLTLPFSSIPVEEVISTGITSGPDINSAPMTHSPITPPTIVWTSTGTIEQSTQPLHAVSSEKVSVQTQSTPYVNSVAVSASPTHENSVSSGSSTSSPYSSASLESLDSTISRRNAITSWLWDLTTSLPTTTWPSTSLSEALSSGHSGVSNPSSTTTEFPLFSAASTSAAKQRNPETETHGPQNTAASTLNTDASSVTGLSETPVGASISSEVPLPMAITSRSDVSGLTSESTANPSLGTASSAGTKLTRTISLPTSESLVSFRMNKDPWTVSIPLGSHPTTNTETSIPVNSAGPPGLSTVASDVIDTPSDGAESIPTVSFSPSPDTEVTTISHFPEKTTHSFRTISSLTHELTSRVTPIPGDWMSSAMSTKPTGASPSITLGERRTITSAAPTTSPIVLTASFTETSTVSLDNETTVKTSDILDARKTNELPSDSSSSSDLINTSIASSTMDVTKTASISPTSISGMTASSSPSLFSSDRPQVPTSTTETNTATSPSVSSNTYSLDGGSNVGGTPSTLPPFTITHPVETSSALLAWSRPVRTFSTMVSTDTASGENPTSSNSVVTSVPAPGTWTSVGSTTDLPAMGFLKTSPAGEAHSLLASTIEPATAFTPHLSAAVVTGSSATSEASLLTTSESKAIHSSPQTPTTPTSGANWETSATPESLLVVTETSDTTLTSKILVTDTILFSTVSTPPSKFPSTGTLSGASFPTLLPDTPAIPLTATEPTSSLATSFDSTPLVTIASDSLGTVPETTLTMSETSNGDALVLKTVSNPDRSIPGITIQGVTESPLHPSSTSPSKIVAPRNTTYEGSITVALSTLPAGTTGSLVFSQSSENSETTALVDSSAGLERASVMPLTTGSQGMASSGGIRSGSTHSTGTKTFSSLPLTMNPGEVTAMSEITTNRLTATQSTAPKGIPVKPTSAESGLLTPVSASSSPSKAFASLTTAPPTWGIPQSTLTFEFSEVPSLDTKSASLPTPGQSLNTIPDSDASTASSSLSKSPEKNPRARMMTSTKAISASSFQSTGFTETPEGSASPSMAGHEPRVPTSGTGDPRYASESMSYPDPSKASSAMTSTSLASKLTTLFSTGQAARSGSSSSPISLSTEKETSFLSPTASTSRKTSLFLGPSMARQPNILVHLQTSALTLSPTSTLNMSQEEPPELTSSQTIAEEEGTTAETQTLTFTPSETPTSLLPVSSPTEPTARRKSSPETWASSISVPAKTSLVETTDGTLVTTIKMSSQAAQGNSTWPAPAEETGSSPAGTSPGSPEMSTTLKIMSSKEPSISPEIRSTVRNSPWKTPETTVPMETTVEPVTLQSTALGSGSTSISHLPTGTTSPTKSPTENMLATERVSLSPSPPEAWTNLYSGTPGGTRQSLATMSSVSLESPTARSITGTGQQSSPELVSKTTGMEFSMWHGSTGGTTGDTHVSLSTSSNILEDPVTSPNSVSSLTDKSKHKTETWVSTTAIPSTVLNNKIMAAEQQTSRSVDEAYSSTSSWSDQTSGSDITLGASPDVTNTLYITSTAQTTSLVSLPSGDQGITSLTNPSGGKTSSASSVTSPSIGLETLRANVSAVKSDIAPTAGHLSQTSSPAEVSILDVTTAPTPGISTTITTMGTNSISTTTPNPEVGMSTMDSTPATERRTTSTEHPSTWSSTAASDSWTVTDMTSNLKVARSPGTISTMHTTSFLASSTELDSMSTPHGRITVIGTSLVTPSSDASAVKTETSTSERTLSPSDTTASTPISTFSRVQRMSISVPDILSTSWTPSSTEAEDVPVSMVSTDHASTKTDPNTPLSTFLFDSLSTLDWDTGRSLSSATATTSAPQGATTPQELTLETMISPATSQLPFSIGHITSAVTPAAMARSSGVTFSRPDPTSKKAEQTSTQLPTTTSAHPGQVPRSAATTLDVIPHTAKTPDATFQRQGQTALTTEARATSDSWNEKEKSTPSAPWITEMMNSVSEDTIKEVTSSSSVLRTLNTLDINLESGTTSSPSWKSSPYERIAPSESTTDKEAIHPSTNTVETTGWVTSSEHASHSTIPAHSASSKLTSPVVTTSTREQAIVSMSTTTWPESTRARTEPNSFLTIELRDVSPYMDTSSTTQTSIISSPGSTAITKGPRTEITSSKRISSSFLAQSMRSSDSPSEAITRLSNFPAMTESGGMILAMQTSPPGATSLSAPTLDTSATASWTGTPLATTQRFTYSEKTTLFSKGPEDTSQPSPPSVEETSSSSSLVPIHATTSPSNILLTSQGHSPSSTPPVTSVFLSETSGLGKTTDMSRISLEPGTSLPPNLSSTAGEALSTYEASRDTKAIHHSADTAVTNMEATSSEYSPIPGHTKPSKATSPLVTSHIMGDITSSTSVFGSSETTEIETVSSVNQGLQERSTSQVASSATETSTVITHVSSGDATTHVTKTQATFSSGTSISSPHQFITSTNTFTDVSTNPSTSLIMTESSGVTITTQTGPTGAATQGPYLLDTSTMPYLTETPLAVTPDFMQSEKTTLISKGPKDVSWTSPPSVAETSYPSSLTPFLVTTIPPATSTLQGQHTSSPVSATSVLTSGLVKTTDMLNTSMEPVTNSPQNLNNPSNEILATLAATTDIETIHPSINKAVTNMGTASSAHVLHSTLPVSSEPSTATSPMVPASSMGDALASISIPGSETTDIEGEPTSSLTAGRKENSTLQEMNSTTESNIILSNVSVGAITEATKMEVPSFDATFIPTPAQSTKFPDIFSVASSRLSNSPPMTISTHMTTTQTGSSGATSKIPLALDTSTLETSAGTPSVVTEGFAHSKITTAMNNDVKDVSQTNPPFQDEASSPSSQAPVLVTTLPSSVAFTPQWHSTSSPVSMSSVLTSSLVKTAGKVDTSLETVTSSPQSMSNTLDDISVTSAATTDIETTHPSINTVVTNVGTTGSAFESHSTVSAYPEPSKVTSPNVTTSTMEDTTISRSIPKSSKTTRTETETTSSLTPKLRETSISQEITSSTETSTVPYKELTGATTEVSRTDVTSSSSTSFPGPDQSTVSLDISTETNTRLSTSPIMTESAEITITTQTGPHGATSQDTFTMDPSNTTPQAGIHSAMTHGFSQLDVTTLMSRIPQDVSWTSPPSVDKTSSPSSFLSSPAMTTPSLISSTLPEDKLSSPMTSLLTSGLVKITDILRTRLEPVTSSLPNFSSTSDKILATSKDSKDTKEIFPSINTEETNVKANNSGHESHSPALADSETPKATTQMVITTTVGDPAPSTSMPVHGSSETTNIKREPTYFLTPRLRETSTSQESSFPTDTSFLLSKVPTGTITEVSSTGVNSSSKISTPDHDKSTVPPDTFTGEIPRVFTSSIKTKSAEMTITTQASPPESASHSTLPLDTSTTLSQGGTHSTVTQGFPYSEVTTLMGMGPGNVSWMTTPPVEETSSVSSLMSSPAMTSPSPVSSTSPQSIPSSPLPVTALPTSVLVTTTDVLGTTSPESVTSSPPNLSSITHERPATYKDTAHTEAAMHHSTNTAVTNVGTSGSGHKSQSSVLADSETSKATPLMSTTSTLGDTSVSTSTPNISQTNQIQTEPTASLSPRLRESSTSEKTSSTTETNTAFSYVPTGAITQASRTEISSSRTSISDLDRPTIAPDISTGMITRLFTSPIMTKSAEMTVTTQTTTPGATSQGILPWDTSTTLFQGGTHSTVSQGFPHSEITTLRSRTPGDVSWMTTPPVEETSSGFSLMSPSMTSPSPVSSTSPESIPSSPLPVTALLTSVLVTTTNVLGTTSPEPVTSSPPNLSSPTQERLTTYKDTAHTEAMHASMHTNTAVANVGTSISGHESQSSVPADSHTSKATSPMGITFAMGDTSVSTSTPAFFETRIQTESTSSLIPGLRDTRTSEEINTVTETSTVLSEVPTTTTTEVSRTEVITSSRTTISGPDHSKMSPYISTETITRLSTFPFVTGSTEMAITNQTGPIGTISQATLTLDTSSTASWEGTHSPVTQRFPHSEETTTMSRSTKGVSWQSPPSVEETSSPSSPVPLPAITSHSSLYSAVSGSSPTSALPVTSLLTSGRRKTIDMLDTHSELVTSSLPSASSFSGEILTSEASTNTETIHFSENTAETNMGTTNSMHKLHSSVSIHSQPSGHTPPKVTGSMMEDAIVSTSTPGSPETKNVDRDSTSPLTPELKEDSTALVMNSTTESNTVFSSVSLDAATEVSRAEVTYYDPTFMPASAQSTKSPDISPEASSSHSNSPPLTISTHKTIATQTGPSGVTSLGQLTLDTSTIATSAGTPSARTQDFVDSETTSVMNNDLNDVLKTSPFSAEEANSLSSQAPLLVTTSPSPVTSTLQEHSTSSLVSVTSVPTPTLAKITDMDTNLEPVTRSPQNLRNTLATSEATTDTHTMHPSINTAVANVGTTSSPNEFYFTVSPDSDPYKATSAVVITSTSGDSIVSTSMPRSSAMKKIESETTFSLIFRLRETSTSQKIGSSSDTSTVFDKAFTAATTEVSRTELTSSSRTSIQGTEKPTMSPDTSTRSVTMLSTFAGLTKSEERTIATQTGPHRATSQGTLTWDTSITTSQAGTHSAMTHGFSQLDLSTLTSRVPEYISGTSPPSVEKTSSSSSLLSLPAITSPSPVPTTLPESRPSSPVHLTSLPTSGLVKTTDMLASVASLPPNLGSTSHKIPTTSEDIKDTEKMYPSTNIAVTNVGTTTSEKESYSSVPAYSEPPKVTSPMVTSFNIRDTIVSTSMPGSSEITRIEMESTFSLAHGLKGTSTSQDPIVSTEKSAVLHKLTTGATETSRTEVASSRRTSIPGPDHSTESPDISTEVIPSLPISLGITESSNMTIITRTGPPLGSTSQGTFTLDTPTTSSRAGTHSMATQEFPHSEMTTVMNKDPEILSWTIPPSIEKTSFSSSLMPSPAMTSPPVSSTLPKTIHTTPSPMTSLLTPSLVMTTDTLGTSPEPTTSSPPNLSSTSHEILTTDEDTTAIEAMHPSTSTAATNVETTSSGHGSQSSVLADSEKTKATAPMDTTSTMGHTTVSTSMSVSSETTKIKRESTYSLTPGLRETSISQNASFSTDTSIVLSEVPTGTTAEVSRTEVTSSGRTSIPGPSQSTVLPEISTRTMTRLFASPTMTESAEMTIPTQTGPSGSTSQDTLTLDTSTTKSQAKTHSTLTQRFPHSEMTTLMSRGPGDMSWQSSPSLENPSSLPSLLSLPATTSPPPISSTLPVTISSSPLPVTSLLTSSPVTTTDMLHTSPELVTSSPPKLSHTSDERLTTGKDTTNTEAVHPSTNTAASNVEIPSSGHESPSSALADSETSKATSPMFITSTQEDTTVAISTPHFLETSRIQKESISSLSPKLRETGSSVETSSAIETSAVLSEVSIGATTEISRTEVTSSSRTSISGSAESTMLPEISTTRKIIKFPTSPILAESSEMTIKTQTSPPGSTSESTFTLDTSTTPSLVITHSTMTQRLPHSEITTLVSRGAGDVPRPSSLPVEETSPPSSQLSLSAMISPSPVSSTLPASSHSSSASVTSLLTPGQVKTTEVLDASAEPETSSPPSLSSTSVEILATSEVTTDTEKIHPFSNTAVTKVGTSSSGHESPSSVLPDSETTKATSAMGTISIMGDTSVSTLTPALSNTRKIQSEPASSLTTRLRETSTSEETSLATEANTVLSKVSTGATTEVSRTEAISFSRTSMSGPEQSTMSQDISIGTIPRISASSVLTESAKMTITTQTGPSESTLESTLNLNTATTPSWVETHSIVIQGFPHPEMTTSMGRGPGGVSWPSPPFVKETSPPSSPLSLPAVTSPHPVSTTFLAHIPPSPLPVTSLLTSGPATTTDILGTSTEPGTSSSSSLSTTSHERLTTYKDTAHTEAVHPSTNTGGTNVATTSSGYKSQSSVLADSSPMCTTSTMGDTSVLTSTPAFLETRRIQTELASSLTPGLRESSGSEGTSSGTKMSTVLSKVPTGATTEISKEDVTSIPGPAQSTISPDISTRTVSWFSTSPVMTESAEITMNTHTSPLGATTQGTSTLDTSSTTSLTMTHSTISQGFSHSQMSTLMRRGPEDVSWMSPPLLEKTRPSFSLMSSPATTSPSPVSSTLPESISSSPLPVTSLLTSGLAKTTDMLHKSSEPVTNSPANLSSTSVEILATSEVTTDTEKTHPSSNRTVTDVGTSSSGHESTSFVLADSQTSKVTSPMVITSTMEDTSVSTSTPGFFETSRIQTEPTSSLTLGLRKTSSSEGTSLATEMSTVLSGVPTGATAEVSRTEVTSSSRTSISGFAQLTVSPETSTETITRLPTSSIMTESAEMMIKTQTDPPGSTPESTHTVDISTTPNWVETHSTVTQRFSHSEMTTLVSRSPGDMLWPSQSSVEETSSASSLLSLPATTSPSPVSSTLVEDFPSASLPVTSLLNPGLVITTDRMGISREPGTSSTSNLSSTSHERLTTLEDTVDTEDMQPSTHTAVTNVRTSISGHESQSSVLSDSETPKATSPMGTTYTMGETSVSISTSDFFETSRIQIEPTSSLTSGLRETSSSERISSATEGSTVLSEVPSGATTEVSRTEVISSRGTSMSGPDQFTISPDISTEAITRLSTSPIMTESAESAITIETGSPGATSEGTLTLDTSTTTFWSGTHSTASPGFSHSEMTTLMSRTPGDVPWPSLPSVEEASSVSSSLSSPAMTSTSFFSTLPESISSSPHPVTALLTLGPVKTTDMLRTSSEPETSSPPNLSSTSAEILATSEVTKDREKIHPSSNTPVVNVGTVIYKHLSPSSVLADLVTTKPTSPMATTSTLGNTSVSTSTPAFPETMMTQPTSSLTSGLREISTSQETSSATERSASLSGMPTGATTKVSRTEALSLGRTSTPGPAQSTISPEISTETITRISTPLTTTGSAEMTITPKTGHSGASSQGTFTLDTSSRASWPGTHSAATHRSPHSGMTTPMSRGPEDVSWPSRPSVEKTSPPSSLVSLSAVTSPSPLYSTPSESSHSSPLRVTSLFTPVMMKTTDMLDTSLEPVTTSPPSMNITSDESLATSKATMETEAIQLSENTAVTQMGTISARQEFYSSYPGLPEPSKVTSPVVTSSTIKDIVSTTIPASSEITRIEMESTSTLTPTPRETSTSQEIHSATKPSTVPYKALTSATIEDSMTQVMSSSRGPSPDQSTMSQDISTEVITRLSTSPIKTESTEMTITTQTGSPGATSRGTLTLDTSTTFMSGTHSTASQGFSHSQMTALMSRTPGDVPWLSHPSVEEASSASFSLSSPVMTSSSPVSSTLPDSIHSSSLPVTSLLTSGLVKTTELLGTSSEPETSSPPNLSSTSAEILAITEVTTDTEKLEMTNVVTSGYTHESPSSVLADSVTTKATSSMGITYPTGDTNVLTSTPAFSDTSRIQTKSKLSLTPGLMETSISEETSSATEKSTVLSSVPTGATTEVSRTEAISSSRTSIPGPAQSTMSSDTSMETITRISTPLTRKESTDMAITPKTGPSGATSQGTFTLDSSSTASWPGTHSATTQRFPQSVVTTPMSRGPEDVSWPSPLSVEKNSPPSSLVSSSSVTSPSPLYSTPSGSSHSSPVPVTSLFTSIMMKATDMLDASLEPETTSAPNMNITSDESLAASKATTETEAIHVFENTAASHVETTSATEELYSSSPGFSEPTKVISPVVTSSSIRDNMVSTTMPGSSGITRIEIESMSSLTPGLRETRTSQDITSSTETSTVLYKMPSGATPEVSRTEVMPSSRTSIPGPAQSTMSLDISDEVVTRLSTSPIMTESAEITITTQTGYSLATSQVTLPLGTSMTFLSGTHSTMSQGLSHSEMTNLMSRGPESLSWTSPRFVETTRSSSSLTSLPLTTSLSPVSSTLLDSSPSSPLPVTSLILPGLVKTTEVLDTSSEPKTSSSPNLSSTSVEIPATSEIMTDTEKIHPSSNTAVAKVRTSSSVHESHSSVLADSETTITIPSMGITSAVDDTTVFTSNPAFSETRRIPTEPTFSLTPGFRETSTSEETTSITETSAVLYGVPTSATTEVSMTEIMSSNRIHIPDSDQSTMSPDIITEVITRLSSSSMMSESTQMTITTQKSSPGATAQSTLTLATTTAPLARTHSTVPPRFLHSEMTTLMSRSPENPSWKSSLFVEKTSSSSSLLSLPVTTSPSVSSTLPQSIPSSSFSVTSLLTPGMVKTTDTSTEPGTSLSPNLSGTSVEILAASEVTTDTEKIHPSSSMAVTNVGTTSSGHELYSSVSIHSEPSKATYPVGTPSSMAETSISTSMPANFETTGFEAEPFSHLTSGFRKTNMSLDTSSVTPTNTPSSPGSTHLLQSSKTDFTSSAKTSSPDWPPASQYTEIPVDIITPFNASPSITESTGITSFPESRFTMSVTESTHHLSTDLLPSAETISTGTVMPSLSEAMTSFATTGVPRAISGSGSPFSRTESGPGDATLSTIAESLPSSTPVPFSSSTFTTTDSSTIPALHEITSSSATPYRVDTSLGTESSTTEGRLVMVSTLDTSSQPGRTSSSPILDTRMTESVELGTVTSAYQVPSLSTRLTRTDGIMEHITKIPNEAAHRGTIRPVKGPQTSTSPASPKGLHTGGTKRMETTTTALKTTTTALKTTSRATLTTSVYTPTLGTLTPLNASMQMASTIPTEMMITTPYVFPDVPETTSSLATSLGAETSTALPRTTPSVFNRESETTASLVSRSGAERSPVIQTLDVSSSEPDTTASWVIHPAETIPTVSKTTPNFFHSELDTVSSTATSHGADVSSAIPTNISPSELDALTPLVTISGTDTSTTFPTLTKSPHETETRTTWLTHPAETSSTIPRTIPNFSHHESDATPSIATSPGAETSSAIPIMTVSPGAEDLVTSQVTSSGTDRNMTIPTLTLSPGEPKTIASLVTHPEAQTSSAIPTSTISPAVSRLVTSMVTSLAAKTSTTNRALTNSPGEPATTVSLVTHPAQTSPTVPWTTSIFFHSKSDTTPSMTTSHGAESSSAVPTPTVSTEVPGVVTPLVTSSRAVISTTIPILTLSPGEPETTPSMATSHGEEASSAIPTPTVSPGVPGVVTSLVTSSRAVTSTTIPILTFSLGEPETTPSMATSHGTEAGSAVPTVLPEVPGMVTSLVASSRAVTSTTLPTLTLSPGEPETTPSMATSHGAEASSTVPTVSPEVPGVVTSLVTSSSGVNSTSIPTLILSPGELETTPSMATSHGAEASSAVPTPTVSPGVSGVVTPLVTSSRAVTSTTIPILTLSSSEPETTPSMATSHGVEASSAVLTVSPEVPGMVTSLVTSSRAVTSTTIPTLTISSDEPETTTSLVTHSEAKMISAIPTLAVSPTVQGLVTSLVTSSGSETSAFSNLTVASSQPETIDSWVAHPGTEASSVVPTLTVSTGEPFTNISLVTHPAESSSTLPRTTSRFSHSELDTMPSTVTSPEAESSSAISTTISPGIPGVLTSLVTSSGRDISATFPTVPESPHESEATASWVTHPAVTSTTVPRTTPNYSHSEPDTTPSIATSPGAEATSDFPTITVSPDVPDMVTSQVTSSGTDTSITIPTLTLSSGEPETTTSFITYSETHTSSAIPTLPVSPGASKMLTSLVISSGTDSTTTFPTLTETPYEPETTAIQLIHPAETNTMVPRTTPKFSHSKSDTTLPVAITSPGPEASSAVSTTTISPDMSDLVTSLVPSSGTDTSTTFPTLSETPYEPETTATWLTHPAETSTTVSGTIPNFSHRGSDTAPSMVTSPGVDTRSGVPTTTIPPSIPGVVTSQVTSSATDTSTAIPTLTPSPGEPETTASSATHPGTQTGFTVPIRTVPSSEPDTMASWVTHPPQTSTPVSRTTSSFSHSSPDATPVMATSPRTEASSAVLTTISPGAPEMVTSQITSSGAATSTTVPTLTHSPGMPETTALLSTHPRTETSKTFPASTVFPQVSETTASLTIRPGAETSTALPTQTTSSLFTLLVTGTSRVDLSPTASPGVSAKTAPLSTHPGTETSTMIPTSTLSLGLLETTGLLATSSSAETSTSTLTLTVSPAVSGLSSASITTDKPQTVTSWNTETSPSVTSVGPPEFSRTVTGTTMTLIPSEMPTPPKTSHGEGVSPTTILRTTMVEATNLATTGSSPTVAKTTTTFNTLAGSLFTPLTTPGMSTLASESVTSRTSYNHRSWISTTSSYNRRYWTPATSTPVTSTFSPGISTSSIPSSTAATVPFMVPFTLNFTITNLQYEEDMRHPGSRKFNATERELQGLLKPLFRNSSLEYLYSGCRLASLRPEKDSSATAVDAICTHRPDPEDLGLDRERLYWELSNLTNGIQELGPYTLDRNSLYVNGFTHRSSMPTTSTPGTSTVDVGTSGTPSSSPSPTTAGPLLMPFTLNFTITNLQYEEDMRRTGSRKFNTMESVLQGLLKPLFKNTSVGPLYSGCRLTLLRPEKDGAATGVDAICTHRLDPKSPGLNREQLYWELSKLTNDIEELGPYTLDRNSLYVNGFTHQSSVSTTSTPGTSTVDLRTSGTPSSLSSPTIMAAGPLLVPFTLNFTITNLQYGEDMGHPGSRKFNTTERVLQGLLGPIFKNTSVGPLYSGCRLTSLRSEKDGAATGVDAICIHHLDPKSPGLNRERLYWELSQLTNGIKELGPYTLDRNSLYVNGFTHRTSVPTSSTPGTSTVDLGTSGTPFSLPSPATAGPLLVLFTLNFTITNLKYEEDMHRPGSRKFNTTERVLQTLLGPMFKNTSVGLLYSGCRLTLLRSEKDGAATGVDAICTHRLDPKSPGVDREQLYWELSQLTNGIKELGPYTLDRNSLYVNGFTHWIPVPTSSTPGTSTVDLGSGTPSSLPSPTTAGPLLVPFTLNFTITNLKYEEDMHCPGSRKFNTTERVLQSLLGPMFKNTSVGPLYSGCRLTLLRSEKDGAATGVDAICTHRLDPKSPGVDREQLYWELSQLTNGIKELGPYTLDRNSLYVNGFTHQTSAPNTSTPGTSTVDLGTSGTPSSLPSPTSAGPLLVPFTLNFTITNLQYEEDMHHPGSRKFNTTERVLQGLLGPMFKNTSVGLLYSGCRLTLLRPEKNGAATGMDAICSHRLDPKSPGLNREQLYWELSQLTHGIKELGPYTLDRNSLYVNGFTHRSSVAPTSTPGTSTVDLGTSGTPSSLPSPTTAVPLLVPFTLNFTITNLQYGEDMRHPGSRKFNTTERVLQGLLGPLFKNSSVGPLYSGCRLISLRSEKDGAATGVDAICTHHLNPQSPGLDREQLYWQLSQMTNGIKELGPYTLDRNSLYVNGFTHRSSGLTTSTPWTSTVDLGTSGTPSPVPSPTTTGPLLVPFTLNFTITNLQYEENMGHPGSRKFNITESVLQGLLKPLFKSTSVGPLYSGCRLTLLRPEKDGVATRVDAICTHRPDPKIPGLDRQQLYWELSQLTHSITELGPYTLDRDSLYVNGFTQRSSVPTTSTPGTFTVQPETSETPSSLPGPTATGPVLLPFTLNFTITNLQYEEDMRRPGSRKFNTTERVLQGLLMPLFKNTSVSSLYSGCRLTLLRPEKDGAATRVDAVCTHRPDPKSPGLDRERLYWKLSQLTHGITELGPYTLDRHSLYVNGFTHQSSMTTTRTPDTSTMHLATSRTPASLSGPMTASPLLVLFTINFTITNLRYEENMHHPGSRKFNTTERVLQGLLRPVFKNTSVGPLYSGCRLTLLRPKKDGAATKVDAICTYRPDPKSPGLDREQLYWELSQLTHSITELGPYTLDRDSLYVNGFTQRSSVPTTSIPGTPTVDLGTSGTPVSKPGPSAASPLLVLFTLNFTITNLRYEENMQHPGSRKFNTTERVLQGLLRSLFKSTSVGPLYSGCRLTLLRPEKDGTATGVDAICTHHPDPKSPRLDREQLYWELSQLTHNITELGPYALDNDSLFVNGFTHRSSVSTTSTPGTPTVYLGASKTPASIFGPSAASHLLILFTLNFTITNLRYEENMWPGSRKFNTTERVLQGLLRPLFKNTSVGPLYSGCRLTLLRPEKDGEATGVDAICTHRPDPTGPGLDREQLYLELSQLTHSITELGPYTLDRDSLYVNGFTHRSSVPTTSTGVVSEEPFTLNFTINNLRYMADMGQPGSLKFNITDNVMQHLLSPLFQRSSLGARYTGCRVIALRSVKNGAETRVDLLCTYLQPLSGPGLPIKQVFHELSQQTHGITRLGPYSLDKDSLYLNGYNEPGPDEPPTTPKPATTFLPPLSEATTAMGYHLKTLTLNFTISNLQYSPDMGKGSATFNSTEGVLQHLLRPLFQKSSMGPFYLGCQLISLRPEKDGAATGVDTTCTYHPDPVGPGLDIQQLYWELSQLTHGVTQLGFYVLDRDSLFINGYAPQNLSIRGEYQINFHIVNWNLSNPDPTSSEYITLLRDIQDKVTTLYKGSQLHDTFRFCLVTNLTMDSVLVTVKALFSSNLDPSLVEQVFLDKTLNASFHWLGSTYQLVDIHVTEMESSVYQPTSSSSTQHFYLNFTITNLPYSQDKAQPGTTNYQRNKRNIEDALNQLFRNSSIKSYFSDCQVSTFRSVPNRHHTGVDSLCNFSPLARRVDRVAIYEEFLRMTRNGTQLQNFTLDRSSVLVDGYSPNRNEPLTGNSDLPFWAVILIGLAGLLGVITCLICGVLVTTRRRKKEGEYNVQQQCPGYYQSHLDLEDLQ</sequence>
<protein>
    <recommendedName>
        <fullName evidence="14">Mucin-16</fullName>
        <shortName>MUC-16</shortName>
    </recommendedName>
    <alternativeName>
        <fullName evidence="13">Ovarian cancer-related tumor marker CA125</fullName>
        <shortName evidence="13">CA-125</shortName>
    </alternativeName>
    <alternativeName>
        <fullName evidence="11">Ovarian carcinoma antigen CA125</fullName>
    </alternativeName>
</protein>